<comment type="function">
    <molecule>Mature core protein</molecule>
    <text evidence="2 4 5 6 11 22">Packages viral RNA to form a viral nucleocapsid, and promotes virion budding (Probable). Participates in the viral particle production as a result of its interaction with the non-structural protein 5A (By similarity). Binds RNA and may function as a RNA chaperone to induce the RNA structural rearrangements taking place during virus replication (By similarity). Modulates viral translation initiation by interacting with viral IRES and 40S ribosomal subunit (By similarity). Affects various cell signaling pathways, host immunity and lipid metabolism (Probable). Prevents the establishment of cellular antiviral state by blocking the interferon-alpha/beta (IFN-alpha/beta) and IFN-gamma signaling pathways and by blocking the formation of phosphorylated STAT1 and promoting ubiquitin-mediated proteasome-dependent degradation of STAT1 (By similarity). Activates STAT3 leading to cellular transformation (By similarity). Regulates the activity of cellular genes, including c-myc and c-fos (By similarity). May repress the promoter of p53, and sequester CREB3 and SP110 isoform 3/Sp110b in the cytoplasm (By similarity). Represses cell cycle negative regulating factor CDKN1A, thereby interrupting an important check point of normal cell cycle regulation (By similarity). Targets transcription factors involved in the regulation of inflammatory responses and in the immune response: suppresses TNF-induced NF-kappa-B activation, and activates AP-1 (By similarity). Binds to dendritic cells (DCs) via C1QR1, resulting in down-regulation of T-lymphocytes proliferation (By similarity). Alters lipid metabolism by interacting with hepatocellular proteins involved in lipid accumulation and storage (By similarity). Induces up-regulation of FAS promoter activity, and thereby contributes to the increased triglyceride accumulation in hepatocytes (steatosis) (By similarity).</text>
</comment>
<comment type="function">
    <molecule>Envelope glycoprotein E1</molecule>
    <text evidence="5">Forms a heterodimer with envelope glycoprotein E2, which mediates virus attachment to the host cell, virion internalization through clathrin-dependent endocytosis and fusion with host membrane (By similarity). Fusion with the host cell is most likely mediated by both E1 and E2, through conformational rearrangements of the heterodimer required for fusion rather than a classical class II fusion mechanism (By similarity). E1/E2 heterodimer binds host apolipoproteins such as APOB and APOE thereby forming a lipo-viro-particle (LVP) (By similarity). APOE associated to the LVP allows the initial virus attachment to cell surface receptors such as the heparan sulfate proteoglycans (HSPGs), syndecan-1 (SDC1), syndecan-1 (SDC2), the low-density lipoprotein receptor (LDLR) and scavenger receptor class B type I (SCARB1) (By similarity). The cholesterol transfer activity of SCARB1 allows E2 exposure and binding of E2 to SCARB1 and the tetraspanin CD81 (By similarity). E1/E2 heterodimer binding on CD81 activates the epithelial growth factor receptor (EGFR) signaling pathway (By similarity). Diffusion of the complex E1-E2-EGFR-SCARB1-CD81 to the cell lateral membrane allows further interaction with Claudin 1 (CLDN1) and occludin (OCLN) to finally trigger HCV entry (By similarity).</text>
</comment>
<comment type="function">
    <molecule>Envelope glycoprotein E2</molecule>
    <text evidence="4 5">Forms a heterodimer with envelope glycoprotein E1, which mediates virus attachment to the host cell, virion internalization through clathrin-dependent endocytosis and fusion with host membrane (By similarity). Fusion with the host cell is most likely mediated by both E1 and E2, through conformational rearrangements of the heterodimer required for fusion rather than a classical class II fusion mechanism (By similarity). The interaction between envelope glycoprotein E2 and host apolipoprotein E/APOE allows the proper assembly, maturation and infectivity of the viral particles (By similarity). This interaction is probably promoted via the up-regulation of cellular autophagy by the virus (By similarity). E1/E2 heterodimer binds host apolipoproteins such as APOB and APOE thereby forming a lipo-viro-particle (LVP) (By similarity). APOE associated to the LVP allows the initial virus attachment to cell surface receptors such as the heparan sulfate proteoglycans (HSPGs), syndecan-1 (SDC1), syndecan-1 (SDC2), the low-density lipoprotein receptor (LDLR) and scavenger receptor class B type I (SCARB1) (By similarity). The cholesterol transfer activity of SCARB1 allows E2 exposure and binding of E2 to SCARB1 and the tetraspanin CD81 (By similarity). E1/E2 heterodimer binding on CD81 activates the epithelial growth factor receptor (EGFR) signaling pathway (By similarity). Diffusion of the complex E1-E2-EGFR-SCARB1-CD81 to the cell lateral membrane allows further interaction with Claudin 1 (CLDN1) and occludin (OCLN) to finally trigger HCV entry (By similarity). Inhibits host EIF2AK2/PKR activation, preventing the establishment of an antiviral state (By similarity). Viral ligand for CD209/DC-SIGN and CLEC4M/DC-SIGNR, which are respectively found on dendritic cells (DCs), and on liver sinusoidal endothelial cells and macrophage-like cells of lymph node sinuses (By similarity). These interactions allow the capture of circulating HCV particles by these cells and subsequent transmission to permissive cells (By similarity). Capture of circulating HCV particles by these SIGN+ cells may facilitate virus infection of proximal hepatocytes and lymphocyte subpopulations and may be essential for the establishment of persistent infection (By similarity).</text>
</comment>
<comment type="function">
    <molecule>Viroporin p7</molecule>
    <text evidence="5 11 22 23">Ion channel protein that acts as a viroporin and plays an essential role in the assembly, envelopment and secretion of viral particles (Probable). Regulates the host cell secretory pathway, which induces the intracellular retention of viral glycoproteins and favors assembly of viral particles (By similarity). Creates a pore in acidic organelles and releases Ca(2+) and H(+) in the cytoplasm of infected cells, leading to a productive viral infection (Probable). High levels of cytoplasmic Ca(2+) may trigger membrane trafficking and transport of viral ER-associated proteins to viroplasms, sites of viral genome replication (Probable). This ionic imbalance induces the assembly of the inflammasome complex, which triggers the maturation of pro-IL-1beta into IL-1beta through the action of caspase-1 (By similarity). Targets also host mitochondria and induces mitochondrial depolarization (By similarity). In addition of its role as a viroporin, acts as a lipid raft adhesion factor (By similarity).</text>
</comment>
<comment type="function">
    <molecule>Protease NS2</molecule>
    <text evidence="5 21">Cysteine protease required for the proteolytic auto-cleavage between the non-structural proteins NS2 and NS3 (PubMed:17239391). The N-terminus of NS3 is required for the function of NS2 protease (active region NS2-3) (PubMed:17239391). Promotes the initiation of viral particle assembly by mediating the interaction between structural and non-structural proteins (By similarity).</text>
</comment>
<comment type="function">
    <molecule>Serine protease/helicase NS3</molecule>
    <text evidence="5 12">Displays three enzymatic activities: serine protease with a chymotrypsin-like fold, NTPase and RNA helicase (By similarity). NS3 serine protease, in association with NS4A, is responsible for the cleavages of NS3-NS4A, NS4A-NS4B, NS4B-NS5A and NS5A-NS5B (By similarity). The NS3/NS4A complex prevents phosphorylation of host IRF3, thus preventing the establishment of dsRNA induced antiviral state (By similarity). The NS3/NS4A complex induces host amino acid transporter component SLC3A2, thus contributing to HCV propagation (By similarity). NS3 RNA helicase binds to RNA and unwinds both dsDNA and dsRNA in the 3' to 5' direction, and likely resolves RNA complicated stable secondary structures in the template strand (By similarity). Binds a single ATP and catalyzes the unzipping of a single base pair of dsRNA (By similarity). Inhibits host antiviral proteins TBK1 and IRF3 thereby preventing the establishment of an antiviral state (By similarity). Cleaves host MAVS/CARDIF thereby preventing the establishment of an antiviral state (By similarity). Cleaves host TICAM1/TRIF, thereby disrupting TLR3 signaling and preventing the establishment of an antiviral state (By similarity).</text>
</comment>
<comment type="function">
    <molecule>Non-structural protein 4B</molecule>
    <text evidence="5">Induces a specific membrane alteration that serves as a scaffold for the virus replication complex (By similarity). This membrane alteration gives rise to the so-called ER-derived membranous web that contains the replication complex (By similarity). NS4B self-interaction contributes to its function in membranous web formation (By similarity). Promotes host TRIF protein degradation in a CASP8-dependent manner thereby inhibiting host TLR3-mediated interferon signaling (By similarity). Disrupts the interaction between STING and TBK1 contributing to the inhibition of interferon signaling (By similarity).</text>
</comment>
<comment type="function">
    <molecule>Non-structural protein 5A</molecule>
    <text evidence="2 4 5 11 12">Phosphorylated protein that is indispensable for viral replication and assembly (By similarity). Both hypo- and hyperphosphorylated states are required for the viral life cycle (By similarity). The hyperphosphorylated form of NS5A is an inhibitor of viral replication (By similarity). Involved in RNA-binding and especially in binding to the viral genome (By similarity). Zinc is essential for RNA-binding (By similarity). Participates in the viral particle production as a result of its interaction with the mature viral core protein (By similarity). Its interaction with host VAPB may target the viral replication complex to vesicles (By similarity). Down-regulates viral IRES translation initiation (By similarity). Mediates interferon resistance, presumably by interacting with and inhibiting host EIF2AK2/PKR (By similarity). Prevents BIN1-induced apoptosis (By similarity). Acts as a transcriptional activator of some host genes important for viral replication when localized in the nucleus (By similarity). Via the interaction with host PACSIN2, modulates lipid droplet formation in order to promote virion assembly (By similarity). Modulates TNFRSF21/DR6 signaling pathway for viral propagation (By similarity).</text>
</comment>
<comment type="function">
    <molecule>RNA-directed RNA polymerase</molecule>
    <text evidence="5">RNA-dependent RNA polymerase that performs primer-template recognition and RNA synthesis during viral replication. Initiates RNA transcription/replication at a flavin adenine dinucleotide (FAD), resulting in a 5'- FAD cap on viral RNAs. In this way, recognition of viral 5' RNA by host pattern recognition receptors can be bypassed, thereby evading activation of antiviral pathways.</text>
</comment>
<comment type="catalytic activity">
    <molecule>Serine protease/helicase NS3</molecule>
    <reaction evidence="5">
        <text>Hydrolysis of four peptide bonds in the viral precursor polyprotein, commonly with Asp or Glu in the P6 position, Cys or Thr in P1 and Ser or Ala in P1'.</text>
        <dbReference type="EC" id="3.4.21.98"/>
    </reaction>
</comment>
<comment type="catalytic activity">
    <molecule>Serine protease/helicase NS3</molecule>
    <reaction evidence="5">
        <text>a ribonucleoside 5'-triphosphate + H2O = a ribonucleoside 5'-diphosphate + phosphate + H(+)</text>
        <dbReference type="Rhea" id="RHEA:23680"/>
        <dbReference type="ChEBI" id="CHEBI:15377"/>
        <dbReference type="ChEBI" id="CHEBI:15378"/>
        <dbReference type="ChEBI" id="CHEBI:43474"/>
        <dbReference type="ChEBI" id="CHEBI:57930"/>
        <dbReference type="ChEBI" id="CHEBI:61557"/>
        <dbReference type="EC" id="3.6.1.15"/>
    </reaction>
</comment>
<comment type="catalytic activity">
    <molecule>Serine protease/helicase NS3</molecule>
    <reaction evidence="5">
        <text>ATP + H2O = ADP + phosphate + H(+)</text>
        <dbReference type="Rhea" id="RHEA:13065"/>
        <dbReference type="ChEBI" id="CHEBI:15377"/>
        <dbReference type="ChEBI" id="CHEBI:15378"/>
        <dbReference type="ChEBI" id="CHEBI:30616"/>
        <dbReference type="ChEBI" id="CHEBI:43474"/>
        <dbReference type="ChEBI" id="CHEBI:456216"/>
        <dbReference type="EC" id="3.6.4.13"/>
    </reaction>
</comment>
<comment type="catalytic activity">
    <molecule>RNA-directed RNA polymerase</molecule>
    <reaction evidence="14">
        <text>RNA(n) + a ribonucleoside 5'-triphosphate = RNA(n+1) + diphosphate</text>
        <dbReference type="Rhea" id="RHEA:21248"/>
        <dbReference type="Rhea" id="RHEA-COMP:14527"/>
        <dbReference type="Rhea" id="RHEA-COMP:17342"/>
        <dbReference type="ChEBI" id="CHEBI:33019"/>
        <dbReference type="ChEBI" id="CHEBI:61557"/>
        <dbReference type="ChEBI" id="CHEBI:140395"/>
        <dbReference type="EC" id="2.7.7.48"/>
    </reaction>
</comment>
<comment type="cofactor">
    <molecule>Protease NS2</molecule>
    <cofactor evidence="21">
        <name>Zn(2+)</name>
        <dbReference type="ChEBI" id="CHEBI:29105"/>
    </cofactor>
    <text evidence="21">Activity of protease NS2 is dependent on zinc ions and completely inhibited by EDTA. This is probably due to the fact that NS2 protease activity needs NS3 N-terminus that binds a zinc atom (active region NS2-3).</text>
</comment>
<comment type="cofactor">
    <molecule>Serine protease/helicase NS3</molecule>
    <cofactor evidence="21">
        <name>Zn(2+)</name>
        <dbReference type="ChEBI" id="CHEBI:29105"/>
    </cofactor>
    <cofactor evidence="12">
        <name>Mg(2+)</name>
        <dbReference type="ChEBI" id="CHEBI:18420"/>
    </cofactor>
    <text evidence="12 21">Binds 1 zinc ion, which has a structural role (PubMed:17239391). The magnesium ion is essential for the helicase activity (By similarity).</text>
</comment>
<comment type="cofactor">
    <molecule>RNA-directed RNA polymerase</molecule>
    <cofactor evidence="3">
        <name>Mg(2+)</name>
        <dbReference type="ChEBI" id="CHEBI:18420"/>
    </cofactor>
    <text evidence="3">Binds 2 magnesium ion that constitute a dinuclear catalytic metal center.</text>
</comment>
<comment type="activity regulation">
    <text evidence="2 5 19">Inhibited by the antiviral drug hexamethylene amiloride (By similarity). Inhibited by amantadine (PubMed:12560074). Inhibition by amantadine appears to be genotype-dependent (By similarity). Also inhibited by long-alkyl-chain iminosugar derivatives (By similarity).</text>
</comment>
<comment type="activity regulation">
    <molecule>RNA-directed RNA polymerase</molecule>
    <text evidence="5">Activity is up-regulated by PRK2/PKN2-mediated phosphorylation.</text>
</comment>
<comment type="subunit">
    <molecule>Mature core protein</molecule>
    <text evidence="2 4 5 6 8 9 11">Homooligomer (By similarity). Interacts with E1 (via C-terminus) (By similarity). Interacts with the non-structural protein 5A (By similarity). Interacts (via N-terminus) with host STAT1 (via SH2 domain); this interaction results in decreased STAT1 phosphorylation and ubiquitin-mediated proteasome-dependent STAT1 degradation, leading to decreased IFN-stimulated gene transcription (By similarity). Interacts with host STAT3; this interaction constitutively activates STAT3 (By similarity). Interacts with host LTBR receptor (By similarity). Interacts with host TNFRSF1A receptor and possibly induces apoptosis (By similarity). Interacts with host HNRPK (By similarity). Interacts with host YWHAE (By similarity). Interacts with host UBE3A/E6AP (By similarity). Interacts with host DDX3X (By similarity). Interacts with host APOA2 (By similarity). Interacts with host RXRA protein (By similarity). Interacts with host SP110 isoform 3/Sp110b; this interaction sequesters the transcriptional corepressor SP110 away from the nucleus (By similarity). Interacts with host CREB3 nuclear transcription protein; this interaction triggers cell transformation (By similarity). Interacts with host ACY3 (By similarity). Interacts with host C1QR1 (By similarity). Interacts with host RBM24; this interaction, which enhances the interaction of the mature core protein with 5'-UTR, may inhibit viral translation and favor replication (By similarity). Interacts with host EIF2AK2/PKR; this interaction induces the autophosphorylation of EIF2AK2 (By similarity). Part of the viral assembly initiation complex composed of NS2, E1, E2, NS3, NS4A, NS5A and the mature core protein (By similarity).</text>
</comment>
<comment type="subunit">
    <molecule>Envelope glycoprotein E1</molecule>
    <text evidence="5 11">Forms a heterodimer with envelope glycoprotein E2 (By similarity). Interacts with mature core protein (By similarity). Interacts with protease NS2 (By similarity). The heterodimer E1/E2 interacts with host CLDN1; this interaction plays a role in viral entry into host cell (By similarity). Interacts with host SPSB2 (via C-terminus) (By similarity). Part of the viral assembly initiation complex composed of NS2, E1, E2, NS3, NS4A, NS5A and the mature core protein (By similarity). Interacts with host NEURL3; this interaction prevents E1 binding to glycoprotein E2 (By similarity).</text>
</comment>
<comment type="subunit">
    <molecule>Envelope glycoprotein E2</molecule>
    <text evidence="5 11 12">Forms a heterodimer with envelope glycoprotein E1 (By similarity). Interacts with host CD81 and SCARB1 receptors; these interactions play a role in viral entry into host cell (By similarity). Interacts with host EIF2AK2/PKR; this interaction inhibits EIF2AK2 and probably allows the virus to evade the innate immune response (By similarity). Interacts with host CD209/DC-SIGN and CLEC4M/DC-SIGNR (By similarity). Interact with host SPCS1; this interaction is essential for viral particle assembly (By similarity). Interacts with protease NS2 (By similarity). The heterodimer E1/E2 interacts with host CLDN1; this interaction plays a role in viral entry into host cell (By similarity). Part of the viral assembly initiation complex composed of NS2, E1, E2, NS3, NS4A, NS5A and the mature core protein (By similarity). Interacts with host SLC3A2/4F2hc; the interaction may facilitate viral entry into host cell (By similarity). Interacts with human PLSCR1 (By similarity).</text>
</comment>
<comment type="subunit">
    <molecule>Viroporin p7</molecule>
    <text evidence="11 19 20">Homohexamer (PubMed:12560074). Homoheptamer (PubMed:17032656). Interacts with protease NS2 (By similarity).</text>
</comment>
<comment type="subunit">
    <molecule>Protease NS2</molecule>
    <text evidence="5 11">Homodimer (By similarity). Interacts with host SPCS1; this interaction is essential for viral particle assembly (By similarity). Interacts with envelope glycoprotein E1 (By similarity). Interacts with envelope glycoprotein E2 (By similarity). Interacts with viroporin p7 (By similarity). Interacts with serine protease/helicase NS3 (By similarity). Part of the replication complex composed of NS2, NS3, NS4A, NS4B, NS5A and the RNA-directed RNA polymerase embedded in an ER-derived membranous web (By similarity). Part of the viral assembly initiation complex composed of NS2, E1, E2, NS3, NS4A, NS5A and the mature core protein (By similarity).</text>
</comment>
<comment type="subunit">
    <molecule>Serine protease/helicase NS3</molecule>
    <text evidence="3 5 11 12">Interacts with protease NS2 (By similarity). Interacts with non-structural protein 4A; this interaction stabilizes the folding of NS3 serine protease (By similarity). NS3-NS4A interaction is essential for NS3 activation and allows membrane anchorage of the latter (By similarity). NS3/NS4A complex also prevents phosphorylation of host IRF3, thus preventing the establishment of dsRNA induced antiviral state (By similarity). Interacts with host MAVS; this interaction leads to the cleavage and inhibition of host MAVS (By similarity). Interacts with host TICAM1; this interaction leads to the cleavage and inhibition of host TICAM1 (By similarity). Interacts with host TANK-binding kinase/TBK1; this interaction results in the inhibition of the association between TBK1 and IRF3, which leads to the inhibition of IRF3 activation (By similarity). Interacts with host RBM24 (By similarity). Part of the replication complex composed of NS2, NS3, NS4A, NS4B, NS5A and the RNA-directed RNA polymerase embedded in an ER-derived membranous web (By similarity). Part of the viral assembly initiation complex composed of NS2, E1, E2, NS3, NS4A, NS5A and the mature core protein (By similarity).</text>
</comment>
<comment type="subunit">
    <molecule>Non-structural protein 4A</molecule>
    <text evidence="2 3 5 11">Interacts with NS3 serine protease; this interaction stabilizes the folding of NS3 serine protease (By similarity). NS3-NS4A interaction is essential for NS3 activation and allows membrane anchorage of the latter (By similarity). Interacts with non-structural protein 5A (via N-terminus) (By similarity). Part of the replication complex composed of NS2, NS3, NS4A, NS4B, NS5A and the RNA-directed RNA polymerase embedded in an ER-derived membranous web (By similarity). Part of the viral assembly initiation complex composed of NS2, E1, E2, NS3, NS4A, NS5A and the mature core protein (By similarity).</text>
</comment>
<comment type="subunit">
    <molecule>Non-structural protein 4B</molecule>
    <text evidence="5 11">Homomultimer (By similarity). Interacts with non-structural protein NS5A (By similarity). Interacts with host PLA2G4C; this interaction likely initiates the recruitment of replication complexes to lipid droplets (By similarity). Interacts with host STING; this interaction disrupts the interaction between STING and TBK1 thereby suppressing the interferon signaling (By similarity). Part of the replication complex composed of NS2, NS3, NS4A, NS4B, NS5A and the RNA-directed RNA polymerase embedded in an ER-derived membranous web (By similarity).</text>
</comment>
<comment type="subunit">
    <molecule>Non-structural protein 5A</molecule>
    <text evidence="2 3 4 5 11">Monomer. Homodimer; dimerization is required for RNA-binding (By similarity). Interacts with the mature core protein (By similarity). Interacts (via N-terminus) with non-structural protein 4A (By similarity). Interacts with non-structural protein 4B. Interacts (via region D2) with RNA-directed RNA polymerase (By similarity). Part of the viral assembly initiation complex composed of NS2, E1, E2, NS3, NS4A, NS5A and the mature core protein (By similarity). Part of the replication complex composed of NS2, NS3, NS4A, NS4B, NS5A and the RNA-directed RNA polymerase embedded in an ER-derived membranous web (By similarity). Interacts with host GRB2 (By similarity). Interacts with host BIN1 (By similarity). Interacts with host PIK3R1 (By similarity). Interacts with host SRCAP (By similarity). Interacts with host FKBP8 (By similarity). Interacts (via C-terminus) with host VAPB (via MSP domain). Interacts with host EIF2AK2/PKR; this interaction leads to disruption of EIF2AK2 dimerization by NS5A and probably allows the virus to evade the innate immune response. Interacts (via N-terminus) with host PACSIN2 (via N-terminus); this interaction attenuates protein kinase C alpha-mediated phosphorylation of PACSIN2 by disrupting the interaction between PACSIN2 and PRKCA (By similarity). Interacts (via N-terminus) with host SRC kinase (via SH2 domain) (By similarity). Interacts with most Src-family kinases (By similarity). Interacts with host IFI27 and SKP2; promotes the ubiquitin-mediated proteasomal degradation of NS5A (By similarity). Interacts with host GPS2 (By similarity). Interacts with host TNFRSF21; this interaction allows the modulation by the virus of JNK, p38 MAPK, STAT3, and Akt signaling pathways in a DR6-dependent manner. Interacts (via N-terminus) with host CIDEB (via N-terminus); this interaction seems to regulate the association of HCV particles with APOE (By similarity). Interacts with host CHKA/Choline Kinase-alpha; CHKA bridges host PI4KA and NS5A and potentiates NS5A-stimulated PI4KA activity, which then facilitates the targeting of the ternary complex to the ER for viral replication (By similarity). Interacts with host SPSB2 (via C-terminus); this interaction targets NS5A for ubiquitination and degradation (By similarity). Interacts with host RAB18; this interaction may promote the association of NS5A and other replicase components with lipid droplets (By similarity). Interacts (via region D2) with host PPIA/CYPA; the interaction stimulates RNA-binding ability of NS5A and is dependent on the peptidyl-prolyl cis-trans isomerase activity of PPIA/CYPA. Interacts with host TRIM14; this interaction induces the degradation of NS5A (By similarity).</text>
</comment>
<comment type="subunit">
    <molecule>RNA-directed RNA polymerase</molecule>
    <text evidence="5">Homooligomer (By similarity). Interacts with non-structural protein 5A (By similarity). Interacts with host VAPB (By similarity). Interacts with host PRK2/PKN2 (By similarity). Interacts with host HNRNPA1 and SEPT6; these interactions facilitate viral replication (By similarity). Part of the replication complex composed of NS2, NS3, NS4A, NS4B, NS5A and the RNA-directed RNA polymerase (By similarity).</text>
</comment>
<comment type="interaction">
    <interactant intactId="EBI-710506">
        <id>O92972</id>
    </interactant>
    <interactant intactId="EBI-515315">
        <id>P06241</id>
        <label>FYN</label>
    </interactant>
    <organismsDiffer>true</organismsDiffer>
    <experiments>2</experiments>
</comment>
<comment type="interaction">
    <interactant intactId="EBI-710506">
        <id>O92972</id>
    </interactant>
    <interactant intactId="EBI-401755">
        <id>P62993</id>
        <label>GRB2</label>
    </interactant>
    <organismsDiffer>true</organismsDiffer>
    <experiments>2</experiments>
</comment>
<comment type="interaction">
    <interactant intactId="EBI-710506">
        <id>O92972</id>
    </interactant>
    <interactant intactId="EBI-346340">
        <id>P08631</id>
        <label>HCK</label>
    </interactant>
    <organismsDiffer>true</organismsDiffer>
    <experiments>2</experiments>
</comment>
<comment type="interaction">
    <interactant intactId="EBI-710506">
        <id>O92972</id>
    </interactant>
    <interactant intactId="EBI-1401">
        <id>P06240</id>
        <label>Lck</label>
    </interactant>
    <organismsDiffer>true</organismsDiffer>
    <experiments>2</experiments>
</comment>
<comment type="interaction">
    <interactant intactId="EBI-710506">
        <id>O92972</id>
    </interactant>
    <interactant intactId="EBI-79452">
        <id>P07948</id>
        <label>LYN</label>
    </interactant>
    <organismsDiffer>true</organismsDiffer>
    <experiments>2</experiments>
</comment>
<comment type="interaction">
    <interactant intactId="EBI-9213553">
        <id>PRO_0000278742</id>
    </interactant>
    <interactant intactId="EBI-347161">
        <id>P84022</id>
        <label>SMAD3</label>
    </interactant>
    <organismsDiffer>true</organismsDiffer>
    <experiments>6</experiments>
</comment>
<comment type="interaction">
    <interactant intactId="EBI-9213553">
        <id>PRO_0000278742</id>
    </interactant>
    <interactant intactId="EBI-356498">
        <id>P62258</id>
        <label>YWHAE</label>
    </interactant>
    <organismsDiffer>true</organismsDiffer>
    <experiments>5</experiments>
</comment>
<comment type="interaction">
    <interactant intactId="EBI-6918883">
        <id>PRO_0000278746</id>
    </interactant>
    <interactant intactId="EBI-640775">
        <id>P19525</id>
        <label>EIF2AK2</label>
    </interactant>
    <organismsDiffer>true</organismsDiffer>
    <experiments>2</experiments>
</comment>
<comment type="interaction">
    <interactant intactId="EBI-8852105">
        <id>PRO_0000278747</id>
    </interactant>
    <interactant intactId="EBI-8852113">
        <id>PRO_0000278748</id>
        <label>-</label>
        <dbReference type="UniProtKB" id="O92972"/>
    </interactant>
    <organismsDiffer>false</organismsDiffer>
    <experiments>2</experiments>
</comment>
<comment type="interaction">
    <interactant intactId="EBI-10006231">
        <id>PRO_0000278753</id>
    </interactant>
    <interactant intactId="EBI-2511350">
        <id>Q16513</id>
        <label>PKN2</label>
    </interactant>
    <organismsDiffer>true</organismsDiffer>
    <experiments>7</experiments>
</comment>
<comment type="subcellular location">
    <molecule>Core protein precursor</molecule>
    <subcellularLocation>
        <location evidence="4">Host endoplasmic reticulum membrane</location>
        <topology evidence="13">Single-pass membrane protein</topology>
    </subcellularLocation>
    <subcellularLocation>
        <location evidence="4">Host mitochondrion membrane</location>
        <topology evidence="13">Single-pass type I membrane protein</topology>
    </subcellularLocation>
    <text>The C-terminal transmembrane domain of the core protein precursor contains an ER signal leading the nascent polyprotein to the ER membrane.</text>
</comment>
<comment type="subcellular location">
    <molecule>Mature core protein</molecule>
    <subcellularLocation>
        <location evidence="11">Virion</location>
    </subcellularLocation>
    <subcellularLocation>
        <location evidence="11">Host cytoplasm</location>
    </subcellularLocation>
    <subcellularLocation>
        <location evidence="2">Host nucleus</location>
    </subcellularLocation>
    <subcellularLocation>
        <location evidence="11">Host lipid droplet</location>
    </subcellularLocation>
    <text evidence="5">Only a minor proportion of core protein is present in the nucleus (By similarity). Probably present on the surface of lipid droplets (By similarity).</text>
</comment>
<comment type="subcellular location">
    <molecule>Envelope glycoprotein E1</molecule>
    <subcellularLocation>
        <location evidence="22">Virion membrane</location>
        <topology evidence="22">Single-pass type I membrane protein</topology>
    </subcellularLocation>
    <subcellularLocation>
        <location>Host endoplasmic reticulum membrane</location>
        <topology evidence="5">Single-pass type I membrane protein</topology>
    </subcellularLocation>
    <text evidence="5">The C-terminal transmembrane domain acts as a signal sequence and forms a hairpin structure before cleavage by host signal peptidase (By similarity). After cleavage, the membrane sequence is retained at the C-terminus of the protein, serving as ER membrane anchor (By similarity). A reorientation of the second hydrophobic stretch occurs after cleavage producing a single reoriented transmembrane domain (By similarity). These events explain the final topology of the protein (By similarity).</text>
</comment>
<comment type="subcellular location">
    <molecule>Envelope glycoprotein E2</molecule>
    <subcellularLocation>
        <location evidence="22">Virion membrane</location>
        <topology evidence="22">Single-pass type I membrane protein</topology>
    </subcellularLocation>
    <subcellularLocation>
        <location>Host endoplasmic reticulum membrane</location>
        <topology evidence="5">Single-pass type I membrane protein</topology>
    </subcellularLocation>
    <subcellularLocation>
        <location evidence="12">Host lipid droplet</location>
    </subcellularLocation>
    <text evidence="5">The C-terminal transmembrane domain acts as a signal sequence and forms a hairpin structure before cleavage by host signal peptidase (By similarity). After cleavage, the membrane sequence is retained at the C-terminus of the protein, serving as ER membrane anchor (By similarity). A reorientation of the second hydrophobic stretch occurs after cleavage producing a single reoriented transmembrane domain (By similarity). These events explain the final topology of the protein (By similarity).</text>
</comment>
<comment type="subcellular location">
    <molecule>Viroporin p7</molecule>
    <subcellularLocation>
        <location evidence="5">Host endoplasmic reticulum membrane</location>
        <topology evidence="5">Multi-pass membrane protein</topology>
    </subcellularLocation>
    <subcellularLocation>
        <location evidence="5">Host mitochondrion</location>
    </subcellularLocation>
    <subcellularLocation>
        <location evidence="5">Host cell membrane</location>
    </subcellularLocation>
    <text evidence="5">The C-terminus of p7 membrane domain acts as a signal sequence (By similarity). After cleavage by host signal peptidase, the membrane sequence is retained at the C-terminus of the protein, serving as ER membrane anchor (By similarity). ER retention of p7 is leaky and a small fraction reaches the plasma membrane (By similarity).</text>
</comment>
<comment type="subcellular location">
    <molecule>Protease NS2</molecule>
    <subcellularLocation>
        <location evidence="5">Host endoplasmic reticulum membrane</location>
        <topology evidence="5">Multi-pass membrane protein</topology>
    </subcellularLocation>
    <subcellularLocation>
        <location evidence="12">Host lipid droplet</location>
    </subcellularLocation>
    <text evidence="11">Probably present on the surface of lipid droplets.</text>
</comment>
<comment type="subcellular location">
    <molecule>Serine protease/helicase NS3</molecule>
    <subcellularLocation>
        <location evidence="22">Host endoplasmic reticulum membrane</location>
        <topology evidence="22">Peripheral membrane protein</topology>
    </subcellularLocation>
    <text evidence="22">NS3 is associated to the ER membrane through its binding to NS4A.</text>
</comment>
<comment type="subcellular location">
    <molecule>Non-structural protein 4A</molecule>
    <subcellularLocation>
        <location evidence="22">Host endoplasmic reticulum membrane</location>
        <topology evidence="22">Single-pass type I membrane protein</topology>
    </subcellularLocation>
    <text>Host membrane insertion occurs after processing by the NS3 protease.</text>
</comment>
<comment type="subcellular location">
    <molecule>Non-structural protein 4B</molecule>
    <subcellularLocation>
        <location evidence="5">Host endoplasmic reticulum membrane</location>
        <topology evidence="5">Multi-pass membrane protein</topology>
    </subcellularLocation>
    <text evidence="5">A reorientation of the N-terminus into the ER lumen occurs post-translationally.</text>
</comment>
<comment type="subcellular location">
    <molecule>Non-structural protein 5A</molecule>
    <subcellularLocation>
        <location evidence="5">Host endoplasmic reticulum membrane</location>
        <topology evidence="5">Peripheral membrane protein</topology>
    </subcellularLocation>
    <subcellularLocation>
        <location evidence="5">Host cytoplasm</location>
        <location evidence="5">Host perinuclear region</location>
    </subcellularLocation>
    <subcellularLocation>
        <location evidence="2">Host mitochondrion</location>
    </subcellularLocation>
    <subcellularLocation>
        <location evidence="5">Host cytoplasm</location>
    </subcellularLocation>
    <subcellularLocation>
        <location evidence="2">Host nucleus</location>
    </subcellularLocation>
    <subcellularLocation>
        <location evidence="12">Host lipid droplet</location>
    </subcellularLocation>
    <text evidence="2 5">Host membrane insertion occurs after processing by the NS3 protease (By similarity). Localizes at the surface of lipid droplets (By similarity).</text>
</comment>
<comment type="subcellular location">
    <molecule>RNA-directed RNA polymerase</molecule>
    <subcellularLocation>
        <location evidence="5">Host cytoplasm</location>
    </subcellularLocation>
    <subcellularLocation>
        <location>Host endoplasmic reticulum membrane</location>
        <topology evidence="5">Single-pass type IV membrane protein</topology>
    </subcellularLocation>
    <text evidence="5">Host membrane insertion occurs after processing by the NS3 protease.</text>
</comment>
<comment type="domain">
    <molecule>Envelope glycoprotein E1</molecule>
    <text evidence="5">The transmembrane regions of envelope E1 and E2 glycoproteins are involved in heterodimer formation, ER localization, and assembly of these proteins.</text>
</comment>
<comment type="domain">
    <molecule>Envelope glycoprotein E2</molecule>
    <text evidence="3 5">The transmembrane regions of envelope E1 and E2 glycoproteins are involved in heterodimer formation, ER localization, and assembly of these proteins (By similarity). Envelope E2 glycoprotein contain two highly variable regions called hypervariable region 1 and 2 (HVR1 and HVR2) (By similarity). E2 also contain two segments involved in CD81-binding (By similarity). HVR1 is implicated in the SCARB1-mediated cell entry and probably acts as a regulator of the association of particles with lipids (By similarity).</text>
</comment>
<comment type="domain">
    <molecule>Protease NS2</molecule>
    <text evidence="21">The N-terminus of NS3 is required for the catalytic activity of protease NS2 (PubMed:17239391). The minimal catalytic region includes the C-terminus of NS2 and the N-terminus NS3 protease domain (active region NS2-3) (PubMed:17239391).</text>
</comment>
<comment type="domain">
    <molecule>Serine protease/helicase NS3</molecule>
    <text evidence="2 5 21">The N-terminal one-third contains the protease activity (By similarity). This region contains a zinc atom that does not belong to the active site, but may play a structural rather than a catalytic role (PubMed:17239391). This region is essential for the activity of protease NS2, maybe by contributing to the folding of the latter (PubMed:17239391). The NTPase/helicase activity is located in the twothirds C-terminus of NS3, this domain contains the NTPase and RNA-binding regions (By similarity).</text>
</comment>
<comment type="domain">
    <molecule>Non-structural protein 4B</molecule>
    <text evidence="11">Contains a glycine zipper region that critically contributes to the biogenesis of functional ER-derived replication organelles.</text>
</comment>
<comment type="domain">
    <molecule>Non-structural protein 5A</molecule>
    <text evidence="2 5">The N-terminus of NS5A acts as membrane anchor (By similarity). The central part of NS5A contains a variable region called interferon sensitivity determining region (ISDR) and seems to be intrinsically disordered and interacts with NS5B and host EIF2AK2 (By similarity). The C-terminus of NS5A contains a variable region called variable region 3 (V3) (By similarity). ISDR and V3 may be involved in sensitivity and/or resistance to IFN-alpha therapy (By similarity). The C-terminus contains a nuclear localization signal (By similarity). The SH3-binding domain is involved in the interaction with host BIN1, GRB2 and Src-family kinases (By similarity).</text>
</comment>
<comment type="PTM">
    <molecule>Genome polyprotein</molecule>
    <text evidence="4 5">Specific enzymatic cleavages in vivo yield mature proteins (By similarity). The structural proteins, core, E1, E2 and p7 are produced by proteolytic processing by host signal peptidases (By similarity). The core protein precursor is synthesized as a 23 kDa, which is retained in the ER membrane through the hydrophobic signal peptide (By similarity). Cleavage by the signal peptidase releases the 21 kDa mature core protein (By similarity). The cleavage of the core protein precursor occurs between aminoacids 176 and 188 but the exact cleavage site is not known (By similarity). Some degraded forms of the core protein appear as well during the course of infection (By similarity). The other proteins (p7, NS2, NS3, NS4A, NS4B, NS5A and NS5B) are cleaved by the viral proteases (By similarity). Autoprocessing between NS2 and NS3 is mediated by the NS2 cysteine protease catalytic domain and regulated by the NS3 N-terminal domain (By similarity).</text>
</comment>
<comment type="PTM">
    <molecule>Mature core protein</molecule>
    <text evidence="7">Phosphorylated by host PKC and PKA.</text>
</comment>
<comment type="PTM">
    <molecule>Mature core protein</molecule>
    <text evidence="8">Ubiquitinated; mediated by UBE3A and leading to core protein subsequent proteasomal degradation.</text>
</comment>
<comment type="PTM">
    <molecule>Envelope glycoprotein E1</molecule>
    <text evidence="5">Highly N-glycosylated.</text>
</comment>
<comment type="PTM">
    <molecule>Envelope glycoprotein E2</molecule>
    <text evidence="5">Highly N-glycosylated.</text>
</comment>
<comment type="PTM">
    <molecule>Protease NS2</molecule>
    <text evidence="5">Palmitoylation is required for NS2/3 autoprocessing and E2 recruitment to membranes.</text>
</comment>
<comment type="PTM">
    <molecule>Non-structural protein 4B</molecule>
    <text evidence="5">Palmitoylated. This modification may play a role in its polymerization or in protein-protein interactions.</text>
</comment>
<comment type="PTM">
    <molecule>Non-structural protein 5A</molecule>
    <text evidence="2 4">Phosphorylated on serines in a basal form termed p56 (By similarity). p58 is a hyperphosphorylated form of p56 (By similarity). p56 and p58 coexist in the cell in roughly equivalent amounts (By similarity). Hyperphosphorylation is dependent on the presence of NS4A (By similarity). Host CSNK1A1/CKI-alpha or RPS6KB1 kinases may be responsible for NS5A phosphorylation (By similarity).</text>
</comment>
<comment type="PTM">
    <molecule>Non-structural protein 5A</molecule>
    <text evidence="11">Tyrosine phosphorylation is essential for the interaction with host SRC.</text>
</comment>
<comment type="PTM">
    <molecule>RNA-directed RNA polymerase</molecule>
    <text evidence="2">The N-terminus is phosphorylated by host PRK2/PKN2.</text>
</comment>
<comment type="miscellaneous">
    <text evidence="22">Viral particle assembly takes place at the surface of ER-derived membranes in close proximity to lipid droplets. NS2 associates with E1/E2 glycoproteins, NS3 and NS5A, which interacts with the viral RNA and core protein to promote genome encapsidation. The nucleocapsid buds at the ER membrane where E1/E2 glycoproteins are anchored and afterward associate with nascent lipid droplet to acquire APOE and APOC. Secretion of viral particles is probably regulated by viroporin p7.</text>
</comment>
<comment type="miscellaneous">
    <molecule>Non-structural protein 5A</molecule>
    <text evidence="22">Cell culture adaptation of the virus leads to mutations in NS5A, reducing its inhibitory effect on replication.</text>
</comment>
<comment type="miscellaneous">
    <molecule>Mature core protein</molecule>
    <text evidence="2">Exerts viral interference on hepatitis B virus when HCV and HBV coinfect the same cell, by suppressing HBV gene expression, RNA encapsidation and budding.</text>
</comment>
<comment type="similarity">
    <text evidence="22">Belongs to the hepacivirus polyprotein family.</text>
</comment>
<comment type="caution">
    <text evidence="22">The core gene probably also codes for alternative reading frame proteins (ARFPs). Many functions depicted for the core protein might belong to the ARFPs.</text>
</comment>
<protein>
    <recommendedName>
        <fullName>Genome polyprotein</fullName>
    </recommendedName>
    <component>
        <recommendedName>
            <fullName>Core protein precursor</fullName>
        </recommendedName>
        <alternativeName>
            <fullName>Capsid protein C</fullName>
        </alternativeName>
        <alternativeName>
            <fullName>p23</fullName>
        </alternativeName>
    </component>
    <component>
        <recommendedName>
            <fullName>Mature core protein</fullName>
        </recommendedName>
        <alternativeName>
            <fullName>p21</fullName>
        </alternativeName>
    </component>
    <component>
        <recommendedName>
            <fullName>Envelope glycoprotein E1</fullName>
        </recommendedName>
        <alternativeName>
            <fullName>gp32</fullName>
        </alternativeName>
        <alternativeName>
            <fullName>gp35</fullName>
        </alternativeName>
    </component>
    <component>
        <recommendedName>
            <fullName>Envelope glycoprotein E2</fullName>
        </recommendedName>
        <alternativeName>
            <fullName>NS1</fullName>
        </alternativeName>
        <alternativeName>
            <fullName>gp68</fullName>
        </alternativeName>
        <alternativeName>
            <fullName>gp70</fullName>
        </alternativeName>
    </component>
    <component>
        <recommendedName>
            <fullName>Viroporin p7</fullName>
        </recommendedName>
    </component>
    <component>
        <recommendedName>
            <fullName>Protease NS2</fullName>
            <shortName>p23</shortName>
            <ecNumber evidence="21">3.4.22.-</ecNumber>
        </recommendedName>
        <alternativeName>
            <fullName>Non-structural protein 2</fullName>
            <shortName>NS2</shortName>
        </alternativeName>
    </component>
    <component>
        <recommendedName>
            <fullName>Serine protease/helicase NS3</fullName>
            <ecNumber evidence="21">3.4.21.98</ecNumber>
            <ecNumber evidence="5">3.6.1.15</ecNumber>
            <ecNumber evidence="5">3.6.4.13</ecNumber>
        </recommendedName>
        <alternativeName>
            <fullName>Hepacivirin</fullName>
        </alternativeName>
        <alternativeName>
            <fullName evidence="5">NS3 helicase</fullName>
        </alternativeName>
        <alternativeName>
            <fullName evidence="5">NS3 protease</fullName>
        </alternativeName>
        <alternativeName>
            <fullName>NS3P</fullName>
        </alternativeName>
        <alternativeName>
            <fullName>Viroporin p70</fullName>
        </alternativeName>
    </component>
    <component>
        <recommendedName>
            <fullName>Non-structural protein 4A</fullName>
            <shortName>NS4A</shortName>
        </recommendedName>
        <alternativeName>
            <fullName>p8</fullName>
        </alternativeName>
    </component>
    <component>
        <recommendedName>
            <fullName>Non-structural protein 4B</fullName>
            <shortName>NS4B</shortName>
        </recommendedName>
        <alternativeName>
            <fullName>p27</fullName>
        </alternativeName>
    </component>
    <component>
        <recommendedName>
            <fullName>Non-structural protein 5A</fullName>
            <shortName>NS5A</shortName>
        </recommendedName>
        <alternativeName>
            <fullName>p56/58</fullName>
        </alternativeName>
    </component>
    <component>
        <recommendedName>
            <fullName>RNA-directed RNA polymerase</fullName>
            <ecNumber evidence="5">2.7.7.48</ecNumber>
        </recommendedName>
        <alternativeName>
            <fullName>NS5B</fullName>
        </alternativeName>
        <alternativeName>
            <fullName>p68</fullName>
        </alternativeName>
    </component>
</protein>
<proteinExistence type="evidence at protein level"/>
<name>POLG_HCVJ4</name>
<dbReference type="EC" id="3.4.22.-" evidence="21"/>
<dbReference type="EC" id="3.4.21.98" evidence="21"/>
<dbReference type="EC" id="3.6.1.15" evidence="5"/>
<dbReference type="EC" id="3.6.4.13" evidence="5"/>
<dbReference type="EC" id="2.7.7.48" evidence="5"/>
<dbReference type="EMBL" id="D10750">
    <property type="protein sequence ID" value="BAA01583.1"/>
    <property type="molecule type" value="Genomic_RNA"/>
</dbReference>
<dbReference type="EMBL" id="AF054247">
    <property type="protein sequence ID" value="AAC15722.1"/>
    <property type="molecule type" value="Genomic_RNA"/>
</dbReference>
<dbReference type="EMBL" id="AF054248">
    <property type="protein sequence ID" value="AAC15723.1"/>
    <property type="molecule type" value="Genomic_RNA"/>
</dbReference>
<dbReference type="EMBL" id="AF054249">
    <property type="protein sequence ID" value="AAC15724.1"/>
    <property type="molecule type" value="Genomic_RNA"/>
</dbReference>
<dbReference type="EMBL" id="AF054250">
    <property type="protein sequence ID" value="AAC15725.1"/>
    <property type="molecule type" value="Genomic_RNA"/>
</dbReference>
<dbReference type="PIR" id="A61196">
    <property type="entry name" value="A61196"/>
</dbReference>
<dbReference type="PIR" id="PQ0246">
    <property type="entry name" value="PQ0246"/>
</dbReference>
<dbReference type="PIR" id="PQ0804">
    <property type="entry name" value="PQ0804"/>
</dbReference>
<dbReference type="PIR" id="PS0329">
    <property type="entry name" value="PS0329"/>
</dbReference>
<dbReference type="PDB" id="1NB4">
    <property type="method" value="X-ray"/>
    <property type="resolution" value="2.00 A"/>
    <property type="chains" value="A/B=2420-2989"/>
</dbReference>
<dbReference type="PDB" id="1NB6">
    <property type="method" value="X-ray"/>
    <property type="resolution" value="2.60 A"/>
    <property type="chains" value="A/B=2420-2989"/>
</dbReference>
<dbReference type="PDB" id="1NB7">
    <property type="method" value="X-ray"/>
    <property type="resolution" value="2.90 A"/>
    <property type="chains" value="A/B=2420-2989"/>
</dbReference>
<dbReference type="PDB" id="2F55">
    <property type="method" value="X-ray"/>
    <property type="resolution" value="3.30 A"/>
    <property type="chains" value="A/B/C=1216-1650"/>
</dbReference>
<dbReference type="PDB" id="2MTS">
    <property type="method" value="NMR"/>
    <property type="chains" value="A=747-809"/>
</dbReference>
<dbReference type="PDB" id="2XHU">
    <property type="method" value="X-ray"/>
    <property type="resolution" value="2.29 A"/>
    <property type="chains" value="A/B=2420-2989"/>
</dbReference>
<dbReference type="PDB" id="2XHV">
    <property type="method" value="X-ray"/>
    <property type="resolution" value="1.90 A"/>
    <property type="chains" value="A/B=2420-2989"/>
</dbReference>
<dbReference type="PDB" id="2XHW">
    <property type="method" value="X-ray"/>
    <property type="resolution" value="2.66 A"/>
    <property type="chains" value="A=2420-2989"/>
</dbReference>
<dbReference type="PDB" id="2YOJ">
    <property type="method" value="X-ray"/>
    <property type="resolution" value="1.76 A"/>
    <property type="chains" value="A/B=2420-2989"/>
</dbReference>
<dbReference type="PDB" id="3CSO">
    <property type="method" value="X-ray"/>
    <property type="resolution" value="2.71 A"/>
    <property type="chains" value="A/B=2420-2989"/>
</dbReference>
<dbReference type="PDB" id="3GNV">
    <property type="method" value="X-ray"/>
    <property type="resolution" value="2.75 A"/>
    <property type="chains" value="A/B=2420-2989"/>
</dbReference>
<dbReference type="PDB" id="3GNW">
    <property type="method" value="X-ray"/>
    <property type="resolution" value="2.39 A"/>
    <property type="chains" value="A/B=2420-2989"/>
</dbReference>
<dbReference type="PDB" id="3GOL">
    <property type="method" value="X-ray"/>
    <property type="resolution" value="2.85 A"/>
    <property type="chains" value="A/B=2420-2989"/>
</dbReference>
<dbReference type="PDB" id="3HKY">
    <property type="method" value="X-ray"/>
    <property type="resolution" value="1.90 A"/>
    <property type="chains" value="A/B=2420-2989"/>
</dbReference>
<dbReference type="PDB" id="3LKH">
    <property type="method" value="X-ray"/>
    <property type="resolution" value="2.05 A"/>
    <property type="chains" value="A/B=2420-2989"/>
</dbReference>
<dbReference type="PDB" id="3MWV">
    <property type="method" value="X-ray"/>
    <property type="resolution" value="2.20 A"/>
    <property type="chains" value="A/B=2420-2989"/>
</dbReference>
<dbReference type="PDB" id="3MWW">
    <property type="method" value="X-ray"/>
    <property type="resolution" value="2.80 A"/>
    <property type="chains" value="A/B=2420-2989"/>
</dbReference>
<dbReference type="PDB" id="3SKA">
    <property type="method" value="X-ray"/>
    <property type="resolution" value="1.73 A"/>
    <property type="chains" value="A/B=2420-2989"/>
</dbReference>
<dbReference type="PDB" id="3SKE">
    <property type="method" value="X-ray"/>
    <property type="resolution" value="1.97 A"/>
    <property type="chains" value="A/B=2420-2989"/>
</dbReference>
<dbReference type="PDB" id="3SKH">
    <property type="method" value="X-ray"/>
    <property type="resolution" value="2.50 A"/>
    <property type="chains" value="A/B=2420-2989"/>
</dbReference>
<dbReference type="PDB" id="3TYQ">
    <property type="method" value="X-ray"/>
    <property type="resolution" value="1.60 A"/>
    <property type="chains" value="A/B=2420-2989"/>
</dbReference>
<dbReference type="PDB" id="3TYV">
    <property type="method" value="X-ray"/>
    <property type="resolution" value="1.65 A"/>
    <property type="chains" value="A/B=2420-2989"/>
</dbReference>
<dbReference type="PDB" id="3U4O">
    <property type="method" value="X-ray"/>
    <property type="resolution" value="1.77 A"/>
    <property type="chains" value="A/B=2420-2989"/>
</dbReference>
<dbReference type="PDB" id="3U4R">
    <property type="method" value="X-ray"/>
    <property type="resolution" value="2.00 A"/>
    <property type="chains" value="A/B=2420-2989"/>
</dbReference>
<dbReference type="PDB" id="3UPH">
    <property type="method" value="X-ray"/>
    <property type="resolution" value="2.00 A"/>
    <property type="chains" value="A/B=2420-2989"/>
</dbReference>
<dbReference type="PDB" id="3UPI">
    <property type="method" value="X-ray"/>
    <property type="resolution" value="2.00 A"/>
    <property type="chains" value="A/B=2420-2989"/>
</dbReference>
<dbReference type="PDB" id="4DRU">
    <property type="method" value="X-ray"/>
    <property type="resolution" value="2.10 A"/>
    <property type="chains" value="A/B=2420-2982"/>
</dbReference>
<dbReference type="PDB" id="4EAW">
    <property type="method" value="X-ray"/>
    <property type="resolution" value="2.00 A"/>
    <property type="chains" value="A/B=2420-2981"/>
</dbReference>
<dbReference type="PDB" id="4GMC">
    <property type="method" value="X-ray"/>
    <property type="resolution" value="2.70 A"/>
    <property type="chains" value="A/B=2420-2989"/>
</dbReference>
<dbReference type="PDB" id="4IZ0">
    <property type="method" value="X-ray"/>
    <property type="resolution" value="2.22 A"/>
    <property type="chains" value="A/B=2420-2989"/>
</dbReference>
<dbReference type="PDB" id="4J02">
    <property type="method" value="X-ray"/>
    <property type="resolution" value="2.00 A"/>
    <property type="chains" value="A/B=2420-2989"/>
</dbReference>
<dbReference type="PDB" id="4J04">
    <property type="method" value="X-ray"/>
    <property type="resolution" value="2.00 A"/>
    <property type="chains" value="A/B=2420-2989"/>
</dbReference>
<dbReference type="PDB" id="4J06">
    <property type="method" value="X-ray"/>
    <property type="resolution" value="2.00 A"/>
    <property type="chains" value="A/B=2420-2989"/>
</dbReference>
<dbReference type="PDB" id="4J08">
    <property type="method" value="X-ray"/>
    <property type="resolution" value="2.10 A"/>
    <property type="chains" value="A/B=2420-2989"/>
</dbReference>
<dbReference type="PDB" id="4J0A">
    <property type="method" value="X-ray"/>
    <property type="resolution" value="2.40 A"/>
    <property type="chains" value="A/B=2420-2989"/>
</dbReference>
<dbReference type="PDB" id="4JJS">
    <property type="method" value="X-ray"/>
    <property type="resolution" value="2.20 A"/>
    <property type="chains" value="A/B=2420-2989"/>
</dbReference>
<dbReference type="PDB" id="4JJU">
    <property type="method" value="X-ray"/>
    <property type="resolution" value="1.91 A"/>
    <property type="chains" value="A/B=2420-2989"/>
</dbReference>
<dbReference type="PDB" id="4JTW">
    <property type="method" value="X-ray"/>
    <property type="resolution" value="3.00 A"/>
    <property type="chains" value="A/B=2420-2989"/>
</dbReference>
<dbReference type="PDB" id="4JTY">
    <property type="method" value="X-ray"/>
    <property type="resolution" value="2.60 A"/>
    <property type="chains" value="A/B=2420-2989"/>
</dbReference>
<dbReference type="PDB" id="4JTZ">
    <property type="method" value="X-ray"/>
    <property type="resolution" value="2.80 A"/>
    <property type="chains" value="A/B=2420-2989"/>
</dbReference>
<dbReference type="PDB" id="4JU1">
    <property type="method" value="X-ray"/>
    <property type="resolution" value="2.90 A"/>
    <property type="chains" value="A/B=2420-2989"/>
</dbReference>
<dbReference type="PDB" id="4JU2">
    <property type="method" value="X-ray"/>
    <property type="resolution" value="2.70 A"/>
    <property type="chains" value="A/B=2420-2989"/>
</dbReference>
<dbReference type="PDB" id="4JU3">
    <property type="method" value="X-ray"/>
    <property type="resolution" value="2.00 A"/>
    <property type="chains" value="A/B=2420-2989"/>
</dbReference>
<dbReference type="PDB" id="4JU4">
    <property type="method" value="X-ray"/>
    <property type="resolution" value="2.40 A"/>
    <property type="chains" value="A/B=2420-2989"/>
</dbReference>
<dbReference type="PDB" id="4JU6">
    <property type="method" value="X-ray"/>
    <property type="resolution" value="2.20 A"/>
    <property type="chains" value="A/B=2420-2989"/>
</dbReference>
<dbReference type="PDB" id="4JU7">
    <property type="method" value="X-ray"/>
    <property type="resolution" value="2.20 A"/>
    <property type="chains" value="A/B=2420-2989"/>
</dbReference>
<dbReference type="PDB" id="4JVQ">
    <property type="method" value="X-ray"/>
    <property type="resolution" value="2.40 A"/>
    <property type="chains" value="A/B=2420-2989"/>
</dbReference>
<dbReference type="PDB" id="4JY0">
    <property type="method" value="X-ray"/>
    <property type="resolution" value="2.20 A"/>
    <property type="chains" value="A/B=2420-2989"/>
</dbReference>
<dbReference type="PDB" id="4JY1">
    <property type="method" value="X-ray"/>
    <property type="resolution" value="2.60 A"/>
    <property type="chains" value="A/B=2420-2989"/>
</dbReference>
<dbReference type="PDB" id="4MZ4">
    <property type="method" value="X-ray"/>
    <property type="resolution" value="1.63 A"/>
    <property type="chains" value="A/B=2420-2989"/>
</dbReference>
<dbReference type="PDB" id="4OOW">
    <property type="method" value="X-ray"/>
    <property type="resolution" value="2.57 A"/>
    <property type="chains" value="A/B=2420-2989"/>
</dbReference>
<dbReference type="PDB" id="4RY4">
    <property type="method" value="X-ray"/>
    <property type="resolution" value="2.59 A"/>
    <property type="chains" value="A/B=2420-2989"/>
</dbReference>
<dbReference type="PDB" id="4RY5">
    <property type="method" value="X-ray"/>
    <property type="resolution" value="2.71 A"/>
    <property type="chains" value="A/B=2420-2989"/>
</dbReference>
<dbReference type="PDB" id="4RY6">
    <property type="method" value="X-ray"/>
    <property type="resolution" value="2.52 A"/>
    <property type="chains" value="A/B=2420-2989"/>
</dbReference>
<dbReference type="PDB" id="4RY7">
    <property type="method" value="X-ray"/>
    <property type="resolution" value="3.00 A"/>
    <property type="chains" value="A/B=2420-2989"/>
</dbReference>
<dbReference type="PDB" id="5CZB">
    <property type="method" value="X-ray"/>
    <property type="resolution" value="1.96 A"/>
    <property type="chains" value="A/B=2420-2981"/>
</dbReference>
<dbReference type="PDB" id="5NPH">
    <property type="method" value="X-ray"/>
    <property type="resolution" value="1.70 A"/>
    <property type="chains" value="A=529-540"/>
</dbReference>
<dbReference type="PDB" id="5NPI">
    <property type="method" value="X-ray"/>
    <property type="resolution" value="2.00 A"/>
    <property type="chains" value="D/E=529-540"/>
</dbReference>
<dbReference type="PDBsum" id="1NB4"/>
<dbReference type="PDBsum" id="1NB6"/>
<dbReference type="PDBsum" id="1NB7"/>
<dbReference type="PDBsum" id="2F55"/>
<dbReference type="PDBsum" id="2MTS"/>
<dbReference type="PDBsum" id="2XHU"/>
<dbReference type="PDBsum" id="2XHV"/>
<dbReference type="PDBsum" id="2XHW"/>
<dbReference type="PDBsum" id="2YOJ"/>
<dbReference type="PDBsum" id="3CSO"/>
<dbReference type="PDBsum" id="3GNV"/>
<dbReference type="PDBsum" id="3GNW"/>
<dbReference type="PDBsum" id="3GOL"/>
<dbReference type="PDBsum" id="3HKY"/>
<dbReference type="PDBsum" id="3LKH"/>
<dbReference type="PDBsum" id="3MWV"/>
<dbReference type="PDBsum" id="3MWW"/>
<dbReference type="PDBsum" id="3SKA"/>
<dbReference type="PDBsum" id="3SKE"/>
<dbReference type="PDBsum" id="3SKH"/>
<dbReference type="PDBsum" id="3TYQ"/>
<dbReference type="PDBsum" id="3TYV"/>
<dbReference type="PDBsum" id="3U4O"/>
<dbReference type="PDBsum" id="3U4R"/>
<dbReference type="PDBsum" id="3UPH"/>
<dbReference type="PDBsum" id="3UPI"/>
<dbReference type="PDBsum" id="4DRU"/>
<dbReference type="PDBsum" id="4EAW"/>
<dbReference type="PDBsum" id="4GMC"/>
<dbReference type="PDBsum" id="4IZ0"/>
<dbReference type="PDBsum" id="4J02"/>
<dbReference type="PDBsum" id="4J04"/>
<dbReference type="PDBsum" id="4J06"/>
<dbReference type="PDBsum" id="4J08"/>
<dbReference type="PDBsum" id="4J0A"/>
<dbReference type="PDBsum" id="4JJS"/>
<dbReference type="PDBsum" id="4JJU"/>
<dbReference type="PDBsum" id="4JTW"/>
<dbReference type="PDBsum" id="4JTY"/>
<dbReference type="PDBsum" id="4JTZ"/>
<dbReference type="PDBsum" id="4JU1"/>
<dbReference type="PDBsum" id="4JU2"/>
<dbReference type="PDBsum" id="4JU3"/>
<dbReference type="PDBsum" id="4JU4"/>
<dbReference type="PDBsum" id="4JU6"/>
<dbReference type="PDBsum" id="4JU7"/>
<dbReference type="PDBsum" id="4JVQ"/>
<dbReference type="PDBsum" id="4JY0"/>
<dbReference type="PDBsum" id="4JY1"/>
<dbReference type="PDBsum" id="4MZ4"/>
<dbReference type="PDBsum" id="4OOW"/>
<dbReference type="PDBsum" id="4RY4"/>
<dbReference type="PDBsum" id="4RY5"/>
<dbReference type="PDBsum" id="4RY6"/>
<dbReference type="PDBsum" id="4RY7"/>
<dbReference type="PDBsum" id="5CZB"/>
<dbReference type="PDBsum" id="5NPH"/>
<dbReference type="PDBsum" id="5NPI"/>
<dbReference type="BMRB" id="O92972"/>
<dbReference type="SMR" id="O92972"/>
<dbReference type="IntAct" id="O92972">
    <property type="interactions" value="12"/>
</dbReference>
<dbReference type="BindingDB" id="O92972"/>
<dbReference type="ChEMBL" id="CHEMBL3638332"/>
<dbReference type="DrugBank" id="DB08747">
    <property type="generic name" value="(11R)-10-acetyl-11-(2,4-dichlorophenyl)-6-hydroxy-3,3-dimethyl-2,3,4,5,10,11-hexahydro-1H-dibenzo[b,e][1,4]diazepin-1-one"/>
</dbReference>
<dbReference type="MEROPS" id="S29.001"/>
<dbReference type="ABCD" id="O92972">
    <property type="antibodies" value="1 sequenced antibody"/>
</dbReference>
<dbReference type="euHCVdb" id="AF054247"/>
<dbReference type="euHCVdb" id="AF054248"/>
<dbReference type="euHCVdb" id="AF054249"/>
<dbReference type="euHCVdb" id="AF054250"/>
<dbReference type="euHCVdb" id="D10750"/>
<dbReference type="BRENDA" id="2.7.7.48">
    <property type="organism ID" value="2642"/>
</dbReference>
<dbReference type="BRENDA" id="3.4.21.98">
    <property type="organism ID" value="2642"/>
</dbReference>
<dbReference type="EvolutionaryTrace" id="O92972"/>
<dbReference type="Proteomes" id="UP000008094">
    <property type="component" value="Genome"/>
</dbReference>
<dbReference type="Proteomes" id="UP000180559">
    <property type="component" value="Genome"/>
</dbReference>
<dbReference type="Proteomes" id="UP000180560">
    <property type="component" value="Genome"/>
</dbReference>
<dbReference type="Proteomes" id="UP000180561">
    <property type="component" value="Genome"/>
</dbReference>
<dbReference type="Proteomes" id="UP000180562">
    <property type="component" value="Genome"/>
</dbReference>
<dbReference type="GO" id="GO:0044167">
    <property type="term" value="C:host cell endoplasmic reticulum membrane"/>
    <property type="evidence" value="ECO:0007669"/>
    <property type="project" value="UniProtKB-SubCell"/>
</dbReference>
<dbReference type="GO" id="GO:0044186">
    <property type="term" value="C:host cell lipid droplet"/>
    <property type="evidence" value="ECO:0007669"/>
    <property type="project" value="UniProtKB-SubCell"/>
</dbReference>
<dbReference type="GO" id="GO:0044191">
    <property type="term" value="C:host cell mitochondrial membrane"/>
    <property type="evidence" value="ECO:0007669"/>
    <property type="project" value="UniProtKB-SubCell"/>
</dbReference>
<dbReference type="GO" id="GO:0042025">
    <property type="term" value="C:host cell nucleus"/>
    <property type="evidence" value="ECO:0007669"/>
    <property type="project" value="UniProtKB-SubCell"/>
</dbReference>
<dbReference type="GO" id="GO:0044220">
    <property type="term" value="C:host cell perinuclear region of cytoplasm"/>
    <property type="evidence" value="ECO:0007669"/>
    <property type="project" value="UniProtKB-SubCell"/>
</dbReference>
<dbReference type="GO" id="GO:0020002">
    <property type="term" value="C:host cell plasma membrane"/>
    <property type="evidence" value="ECO:0007669"/>
    <property type="project" value="UniProtKB-SubCell"/>
</dbReference>
<dbReference type="GO" id="GO:0016020">
    <property type="term" value="C:membrane"/>
    <property type="evidence" value="ECO:0007669"/>
    <property type="project" value="UniProtKB-KW"/>
</dbReference>
<dbReference type="GO" id="GO:1990904">
    <property type="term" value="C:ribonucleoprotein complex"/>
    <property type="evidence" value="ECO:0007669"/>
    <property type="project" value="UniProtKB-KW"/>
</dbReference>
<dbReference type="GO" id="GO:0019031">
    <property type="term" value="C:viral envelope"/>
    <property type="evidence" value="ECO:0007669"/>
    <property type="project" value="UniProtKB-KW"/>
</dbReference>
<dbReference type="GO" id="GO:0019013">
    <property type="term" value="C:viral nucleocapsid"/>
    <property type="evidence" value="ECO:0007669"/>
    <property type="project" value="UniProtKB-KW"/>
</dbReference>
<dbReference type="GO" id="GO:0055036">
    <property type="term" value="C:virion membrane"/>
    <property type="evidence" value="ECO:0007669"/>
    <property type="project" value="UniProtKB-SubCell"/>
</dbReference>
<dbReference type="GO" id="GO:0005524">
    <property type="term" value="F:ATP binding"/>
    <property type="evidence" value="ECO:0007669"/>
    <property type="project" value="UniProtKB-KW"/>
</dbReference>
<dbReference type="GO" id="GO:0016887">
    <property type="term" value="F:ATP hydrolysis activity"/>
    <property type="evidence" value="ECO:0007669"/>
    <property type="project" value="RHEA"/>
</dbReference>
<dbReference type="GO" id="GO:0015267">
    <property type="term" value="F:channel activity"/>
    <property type="evidence" value="ECO:0007669"/>
    <property type="project" value="UniProtKB-KW"/>
</dbReference>
<dbReference type="GO" id="GO:0004197">
    <property type="term" value="F:cysteine-type endopeptidase activity"/>
    <property type="evidence" value="ECO:0007669"/>
    <property type="project" value="InterPro"/>
</dbReference>
<dbReference type="GO" id="GO:0060090">
    <property type="term" value="F:molecular adaptor activity"/>
    <property type="evidence" value="ECO:0000353"/>
    <property type="project" value="DisProt"/>
</dbReference>
<dbReference type="GO" id="GO:0003723">
    <property type="term" value="F:RNA binding"/>
    <property type="evidence" value="ECO:0007669"/>
    <property type="project" value="UniProtKB-KW"/>
</dbReference>
<dbReference type="GO" id="GO:0003724">
    <property type="term" value="F:RNA helicase activity"/>
    <property type="evidence" value="ECO:0007669"/>
    <property type="project" value="UniProtKB-EC"/>
</dbReference>
<dbReference type="GO" id="GO:0003968">
    <property type="term" value="F:RNA-directed RNA polymerase activity"/>
    <property type="evidence" value="ECO:0007669"/>
    <property type="project" value="UniProtKB-KW"/>
</dbReference>
<dbReference type="GO" id="GO:0004252">
    <property type="term" value="F:serine-type endopeptidase activity"/>
    <property type="evidence" value="ECO:0007669"/>
    <property type="project" value="InterPro"/>
</dbReference>
<dbReference type="GO" id="GO:0017124">
    <property type="term" value="F:SH3 domain binding"/>
    <property type="evidence" value="ECO:0007669"/>
    <property type="project" value="UniProtKB-KW"/>
</dbReference>
<dbReference type="GO" id="GO:0005198">
    <property type="term" value="F:structural molecule activity"/>
    <property type="evidence" value="ECO:0007669"/>
    <property type="project" value="InterPro"/>
</dbReference>
<dbReference type="GO" id="GO:0008270">
    <property type="term" value="F:zinc ion binding"/>
    <property type="evidence" value="ECO:0007669"/>
    <property type="project" value="InterPro"/>
</dbReference>
<dbReference type="GO" id="GO:0075512">
    <property type="term" value="P:clathrin-dependent endocytosis of virus by host cell"/>
    <property type="evidence" value="ECO:0007669"/>
    <property type="project" value="UniProtKB-KW"/>
</dbReference>
<dbReference type="GO" id="GO:0039654">
    <property type="term" value="P:fusion of virus membrane with host endosome membrane"/>
    <property type="evidence" value="ECO:0007669"/>
    <property type="project" value="UniProtKB-KW"/>
</dbReference>
<dbReference type="GO" id="GO:0034220">
    <property type="term" value="P:monoatomic ion transmembrane transport"/>
    <property type="evidence" value="ECO:0007669"/>
    <property type="project" value="UniProtKB-KW"/>
</dbReference>
<dbReference type="GO" id="GO:0006508">
    <property type="term" value="P:proteolysis"/>
    <property type="evidence" value="ECO:0007669"/>
    <property type="project" value="UniProtKB-KW"/>
</dbReference>
<dbReference type="GO" id="GO:0039520">
    <property type="term" value="P:symbiont-mediated activation of host autophagy"/>
    <property type="evidence" value="ECO:0007669"/>
    <property type="project" value="UniProtKB-KW"/>
</dbReference>
<dbReference type="GO" id="GO:0039645">
    <property type="term" value="P:symbiont-mediated perturbation of host cell cycle G1/S transition checkpoint"/>
    <property type="evidence" value="ECO:0007669"/>
    <property type="project" value="UniProtKB-KW"/>
</dbReference>
<dbReference type="GO" id="GO:0039545">
    <property type="term" value="P:symbiont-mediated suppression of host cytoplasmic pattern recognition receptor signaling pathway via inhibition of MAVS activity"/>
    <property type="evidence" value="ECO:0007669"/>
    <property type="project" value="UniProtKB-KW"/>
</dbReference>
<dbReference type="GO" id="GO:0039563">
    <property type="term" value="P:symbiont-mediated suppression of host JAK-STAT cascade via inhibition of STAT1 activity"/>
    <property type="evidence" value="ECO:0007669"/>
    <property type="project" value="UniProtKB-KW"/>
</dbReference>
<dbReference type="GO" id="GO:0039527">
    <property type="term" value="P:symbiont-mediated suppression of host TRAF-mediated signal transduction"/>
    <property type="evidence" value="ECO:0007669"/>
    <property type="project" value="UniProtKB-KW"/>
</dbReference>
<dbReference type="GO" id="GO:0039502">
    <property type="term" value="P:symbiont-mediated suppression of host type I interferon-mediated signaling pathway"/>
    <property type="evidence" value="ECO:0007669"/>
    <property type="project" value="UniProtKB-KW"/>
</dbReference>
<dbReference type="GO" id="GO:0019087">
    <property type="term" value="P:symbiont-mediated transformation of host cell"/>
    <property type="evidence" value="ECO:0007669"/>
    <property type="project" value="InterPro"/>
</dbReference>
<dbReference type="GO" id="GO:0039694">
    <property type="term" value="P:viral RNA genome replication"/>
    <property type="evidence" value="ECO:0007669"/>
    <property type="project" value="InterPro"/>
</dbReference>
<dbReference type="GO" id="GO:0019062">
    <property type="term" value="P:virion attachment to host cell"/>
    <property type="evidence" value="ECO:0007669"/>
    <property type="project" value="UniProtKB-KW"/>
</dbReference>
<dbReference type="CDD" id="cd17931">
    <property type="entry name" value="DEXHc_viral_Ns3"/>
    <property type="match status" value="1"/>
</dbReference>
<dbReference type="CDD" id="cd20903">
    <property type="entry name" value="HCV_p7"/>
    <property type="match status" value="1"/>
</dbReference>
<dbReference type="CDD" id="cd23202">
    <property type="entry name" value="Hepacivirus_RdRp"/>
    <property type="match status" value="1"/>
</dbReference>
<dbReference type="FunFam" id="1.10.820.10:FF:000001">
    <property type="entry name" value="Genome polyprotein"/>
    <property type="match status" value="1"/>
</dbReference>
<dbReference type="FunFam" id="1.20.1280.150:FF:000001">
    <property type="entry name" value="Genome polyprotein"/>
    <property type="match status" value="1"/>
</dbReference>
<dbReference type="FunFam" id="2.20.25.210:FF:000001">
    <property type="entry name" value="Genome polyprotein"/>
    <property type="match status" value="1"/>
</dbReference>
<dbReference type="FunFam" id="2.20.25.220:FF:000001">
    <property type="entry name" value="Genome polyprotein"/>
    <property type="match status" value="1"/>
</dbReference>
<dbReference type="FunFam" id="2.40.10.10:FF:000029">
    <property type="entry name" value="Genome polyprotein"/>
    <property type="match status" value="1"/>
</dbReference>
<dbReference type="FunFam" id="2.40.10.120:FF:000003">
    <property type="entry name" value="Genome polyprotein"/>
    <property type="match status" value="1"/>
</dbReference>
<dbReference type="FunFam" id="3.30.160.890:FF:000001">
    <property type="entry name" value="Genome polyprotein"/>
    <property type="match status" value="1"/>
</dbReference>
<dbReference type="FunFam" id="3.30.70.270:FF:000015">
    <property type="entry name" value="Genome polyprotein"/>
    <property type="match status" value="1"/>
</dbReference>
<dbReference type="FunFam" id="3.40.50.300:FF:000557">
    <property type="entry name" value="Genome polyprotein"/>
    <property type="match status" value="1"/>
</dbReference>
<dbReference type="FunFam" id="3.40.50.300:FF:000717">
    <property type="entry name" value="Genome polyprotein"/>
    <property type="match status" value="1"/>
</dbReference>
<dbReference type="FunFam" id="4.10.710.10:FF:000001">
    <property type="entry name" value="Genome polyprotein"/>
    <property type="match status" value="1"/>
</dbReference>
<dbReference type="Gene3D" id="2.40.10.120">
    <property type="match status" value="1"/>
</dbReference>
<dbReference type="Gene3D" id="3.30.70.270">
    <property type="match status" value="2"/>
</dbReference>
<dbReference type="Gene3D" id="6.10.250.1610">
    <property type="match status" value="1"/>
</dbReference>
<dbReference type="Gene3D" id="6.10.250.1750">
    <property type="match status" value="1"/>
</dbReference>
<dbReference type="Gene3D" id="6.10.250.2920">
    <property type="match status" value="1"/>
</dbReference>
<dbReference type="Gene3D" id="2.20.25.210">
    <property type="entry name" value="Hepatitis C NS5A, domain 1B"/>
    <property type="match status" value="1"/>
</dbReference>
<dbReference type="Gene3D" id="4.10.710.10">
    <property type="entry name" value="Hepatitis C Virus Capsid Protein, Chain A"/>
    <property type="match status" value="1"/>
</dbReference>
<dbReference type="Gene3D" id="3.30.160.890">
    <property type="entry name" value="Hepatitis C virus envelope glycoprotein E1, chain C"/>
    <property type="match status" value="1"/>
</dbReference>
<dbReference type="Gene3D" id="2.30.30.710">
    <property type="entry name" value="Hepatitis C virus non-structural protein NS2, C-terminal domain"/>
    <property type="match status" value="1"/>
</dbReference>
<dbReference type="Gene3D" id="1.20.1280.150">
    <property type="entry name" value="Hepatitis C virus non-structural protein NS2, N-terminal domain"/>
    <property type="match status" value="1"/>
</dbReference>
<dbReference type="Gene3D" id="2.20.25.220">
    <property type="entry name" value="Hepatitis C virus NS5A, 1B domain"/>
    <property type="match status" value="1"/>
</dbReference>
<dbReference type="Gene3D" id="3.40.50.300">
    <property type="entry name" value="P-loop containing nucleotide triphosphate hydrolases"/>
    <property type="match status" value="2"/>
</dbReference>
<dbReference type="Gene3D" id="1.10.820.10">
    <property type="entry name" value="RNA Helicase Chain A , domain 3"/>
    <property type="match status" value="1"/>
</dbReference>
<dbReference type="Gene3D" id="2.40.10.10">
    <property type="entry name" value="Trypsin-like serine proteases"/>
    <property type="match status" value="1"/>
</dbReference>
<dbReference type="InterPro" id="IPR043502">
    <property type="entry name" value="DNA/RNA_pol_sf"/>
</dbReference>
<dbReference type="InterPro" id="IPR011492">
    <property type="entry name" value="Flavi_DEAD"/>
</dbReference>
<dbReference type="InterPro" id="IPR002521">
    <property type="entry name" value="HCV_Core_C"/>
</dbReference>
<dbReference type="InterPro" id="IPR044896">
    <property type="entry name" value="HCV_core_chain_A"/>
</dbReference>
<dbReference type="InterPro" id="IPR002522">
    <property type="entry name" value="HCV_core_N"/>
</dbReference>
<dbReference type="InterPro" id="IPR002519">
    <property type="entry name" value="HCV_Env"/>
</dbReference>
<dbReference type="InterPro" id="IPR002531">
    <property type="entry name" value="HCV_NS1"/>
</dbReference>
<dbReference type="InterPro" id="IPR002518">
    <property type="entry name" value="HCV_NS2"/>
</dbReference>
<dbReference type="InterPro" id="IPR042205">
    <property type="entry name" value="HCV_NS2_C"/>
</dbReference>
<dbReference type="InterPro" id="IPR042209">
    <property type="entry name" value="HCV_NS2_N"/>
</dbReference>
<dbReference type="InterPro" id="IPR000745">
    <property type="entry name" value="HCV_NS4a"/>
</dbReference>
<dbReference type="InterPro" id="IPR001490">
    <property type="entry name" value="HCV_NS4b"/>
</dbReference>
<dbReference type="InterPro" id="IPR002868">
    <property type="entry name" value="HCV_NS5a"/>
</dbReference>
<dbReference type="InterPro" id="IPR013192">
    <property type="entry name" value="HCV_NS5A_1a"/>
</dbReference>
<dbReference type="InterPro" id="IPR013193">
    <property type="entry name" value="HCV_NS5a_1B_dom"/>
</dbReference>
<dbReference type="InterPro" id="IPR038568">
    <property type="entry name" value="HCV_NS5A_1B_sf"/>
</dbReference>
<dbReference type="InterPro" id="IPR024350">
    <property type="entry name" value="HCV_NS5a_C"/>
</dbReference>
<dbReference type="InterPro" id="IPR049913">
    <property type="entry name" value="HCV_p7"/>
</dbReference>
<dbReference type="InterPro" id="IPR014001">
    <property type="entry name" value="Helicase_ATP-bd"/>
</dbReference>
<dbReference type="InterPro" id="IPR001650">
    <property type="entry name" value="Helicase_C-like"/>
</dbReference>
<dbReference type="InterPro" id="IPR004109">
    <property type="entry name" value="HepC_NS3_protease"/>
</dbReference>
<dbReference type="InterPro" id="IPR054175">
    <property type="entry name" value="NS3_helicase_C"/>
</dbReference>
<dbReference type="InterPro" id="IPR038170">
    <property type="entry name" value="NS5A_1a_sf"/>
</dbReference>
<dbReference type="InterPro" id="IPR027417">
    <property type="entry name" value="P-loop_NTPase"/>
</dbReference>
<dbReference type="InterPro" id="IPR009003">
    <property type="entry name" value="Peptidase_S1_PA"/>
</dbReference>
<dbReference type="InterPro" id="IPR043504">
    <property type="entry name" value="Peptidase_S1_PA_chymotrypsin"/>
</dbReference>
<dbReference type="InterPro" id="IPR043128">
    <property type="entry name" value="Rev_trsase/Diguanyl_cyclase"/>
</dbReference>
<dbReference type="InterPro" id="IPR007094">
    <property type="entry name" value="RNA-dir_pol_PSvirus"/>
</dbReference>
<dbReference type="InterPro" id="IPR002166">
    <property type="entry name" value="RNA_pol_HCV"/>
</dbReference>
<dbReference type="Pfam" id="PF07652">
    <property type="entry name" value="Flavi_DEAD"/>
    <property type="match status" value="1"/>
</dbReference>
<dbReference type="Pfam" id="PF01543">
    <property type="entry name" value="HCV_capsid"/>
    <property type="match status" value="1"/>
</dbReference>
<dbReference type="Pfam" id="PF01542">
    <property type="entry name" value="HCV_core"/>
    <property type="match status" value="1"/>
</dbReference>
<dbReference type="Pfam" id="PF01539">
    <property type="entry name" value="HCV_env"/>
    <property type="match status" value="1"/>
</dbReference>
<dbReference type="Pfam" id="PF01560">
    <property type="entry name" value="HCV_NS1"/>
    <property type="match status" value="1"/>
</dbReference>
<dbReference type="Pfam" id="PF01538">
    <property type="entry name" value="HCV_NS2"/>
    <property type="match status" value="1"/>
</dbReference>
<dbReference type="Pfam" id="PF01006">
    <property type="entry name" value="HCV_NS4a"/>
    <property type="match status" value="1"/>
</dbReference>
<dbReference type="Pfam" id="PF01001">
    <property type="entry name" value="HCV_NS4b"/>
    <property type="match status" value="1"/>
</dbReference>
<dbReference type="Pfam" id="PF01506">
    <property type="entry name" value="HCV_NS5a"/>
    <property type="match status" value="1"/>
</dbReference>
<dbReference type="Pfam" id="PF08300">
    <property type="entry name" value="HCV_NS5a_1a"/>
    <property type="match status" value="1"/>
</dbReference>
<dbReference type="Pfam" id="PF08301">
    <property type="entry name" value="HCV_NS5a_1b"/>
    <property type="match status" value="1"/>
</dbReference>
<dbReference type="Pfam" id="PF12941">
    <property type="entry name" value="HCV_NS5a_C"/>
    <property type="match status" value="1"/>
</dbReference>
<dbReference type="Pfam" id="PF22027">
    <property type="entry name" value="NS3_helicase_C"/>
    <property type="match status" value="1"/>
</dbReference>
<dbReference type="Pfam" id="PF02907">
    <property type="entry name" value="Peptidase_S29"/>
    <property type="match status" value="1"/>
</dbReference>
<dbReference type="Pfam" id="PF00998">
    <property type="entry name" value="RdRP_3"/>
    <property type="match status" value="1"/>
</dbReference>
<dbReference type="SMART" id="SM00487">
    <property type="entry name" value="DEXDc"/>
    <property type="match status" value="1"/>
</dbReference>
<dbReference type="SUPFAM" id="SSF56672">
    <property type="entry name" value="DNA/RNA polymerases"/>
    <property type="match status" value="1"/>
</dbReference>
<dbReference type="SUPFAM" id="SSF52540">
    <property type="entry name" value="P-loop containing nucleoside triphosphate hydrolases"/>
    <property type="match status" value="2"/>
</dbReference>
<dbReference type="SUPFAM" id="SSF50494">
    <property type="entry name" value="Trypsin-like serine proteases"/>
    <property type="match status" value="1"/>
</dbReference>
<dbReference type="PROSITE" id="PS51693">
    <property type="entry name" value="HCV_NS2_PRO"/>
    <property type="match status" value="1"/>
</dbReference>
<dbReference type="PROSITE" id="PS51192">
    <property type="entry name" value="HELICASE_ATP_BIND_1"/>
    <property type="match status" value="1"/>
</dbReference>
<dbReference type="PROSITE" id="PS51194">
    <property type="entry name" value="HELICASE_CTER"/>
    <property type="match status" value="1"/>
</dbReference>
<dbReference type="PROSITE" id="PS51822">
    <property type="entry name" value="HV_PV_NS3_PRO"/>
    <property type="match status" value="1"/>
</dbReference>
<dbReference type="PROSITE" id="PS50507">
    <property type="entry name" value="RDRP_SSRNA_POS"/>
    <property type="match status" value="1"/>
</dbReference>
<organism>
    <name type="scientific">Hepatitis C virus genotype 1b (strain HC-J4)</name>
    <name type="common">HCV</name>
    <dbReference type="NCBI Taxonomy" id="420174"/>
    <lineage>
        <taxon>Viruses</taxon>
        <taxon>Riboviria</taxon>
        <taxon>Orthornavirae</taxon>
        <taxon>Kitrinoviricota</taxon>
        <taxon>Flasuviricetes</taxon>
        <taxon>Amarillovirales</taxon>
        <taxon>Flaviviridae</taxon>
        <taxon>Hepacivirus</taxon>
        <taxon>Hepacivirus hominis</taxon>
    </lineage>
</organism>
<feature type="initiator methionine" description="Removed; by host" evidence="4">
    <location>
        <position position="1"/>
    </location>
</feature>
<feature type="chain" id="PRO_0000450912" description="Genome polyprotein">
    <location>
        <begin position="2"/>
        <end position="3010"/>
    </location>
</feature>
<feature type="chain" id="PRO_0000278742" description="Core protein precursor">
    <location>
        <begin position="2"/>
        <end position="191"/>
    </location>
</feature>
<feature type="chain" id="PRO_0000278743" description="Mature core protein">
    <location>
        <begin position="2"/>
        <end position="177"/>
    </location>
</feature>
<feature type="propeptide" id="PRO_0000278744" description="ER anchor for the core protein, removed in mature form by host signal peptidase">
    <location>
        <begin position="178"/>
        <end position="191"/>
    </location>
</feature>
<feature type="chain" id="PRO_0000278745" description="Envelope glycoprotein E1">
    <location>
        <begin position="192"/>
        <end position="383"/>
    </location>
</feature>
<feature type="chain" id="PRO_0000278746" description="Envelope glycoprotein E2">
    <location>
        <begin position="384"/>
        <end position="746"/>
    </location>
</feature>
<feature type="chain" id="PRO_0000278747" description="Viroporin p7">
    <location>
        <begin position="747"/>
        <end position="809"/>
    </location>
</feature>
<feature type="chain" id="PRO_0000278748" description="Protease NS2" evidence="16">
    <location>
        <begin position="810"/>
        <end position="1026"/>
    </location>
</feature>
<feature type="chain" id="PRO_0000278749" description="Serine protease/helicase NS3">
    <location>
        <begin position="1027"/>
        <end position="1657"/>
    </location>
</feature>
<feature type="chain" id="PRO_0000278750" description="Non-structural protein 4A">
    <location>
        <begin position="1658"/>
        <end position="1711"/>
    </location>
</feature>
<feature type="chain" id="PRO_0000278751" description="Non-structural protein 4B">
    <location>
        <begin position="1712"/>
        <end position="1972"/>
    </location>
</feature>
<feature type="chain" id="PRO_0000278752" description="Non-structural protein 5A">
    <location>
        <begin position="1973"/>
        <end position="2419"/>
    </location>
</feature>
<feature type="chain" id="PRO_0000278753" description="RNA-directed RNA polymerase">
    <location>
        <begin position="2420"/>
        <end position="3010"/>
    </location>
</feature>
<feature type="topological domain" description="Cytoplasmic" evidence="13">
    <location>
        <begin position="2"/>
        <end position="168"/>
    </location>
</feature>
<feature type="transmembrane region" description="Helical" evidence="13">
    <location>
        <begin position="169"/>
        <end position="189"/>
    </location>
</feature>
<feature type="topological domain" description="Lumenal" evidence="5">
    <location>
        <begin position="190"/>
        <end position="358"/>
    </location>
</feature>
<feature type="transmembrane region" description="Helical" evidence="5">
    <location>
        <begin position="359"/>
        <end position="379"/>
    </location>
</feature>
<feature type="topological domain" description="Lumenal" evidence="5">
    <location>
        <begin position="380"/>
        <end position="725"/>
    </location>
</feature>
<feature type="transmembrane region" description="Helical" evidence="5">
    <location>
        <begin position="726"/>
        <end position="746"/>
    </location>
</feature>
<feature type="topological domain" description="Lumenal" evidence="5">
    <location>
        <begin position="747"/>
        <end position="757"/>
    </location>
</feature>
<feature type="transmembrane region" description="Helical" evidence="5">
    <location>
        <begin position="758"/>
        <end position="778"/>
    </location>
</feature>
<feature type="topological domain" description="Cytoplasmic" evidence="5">
    <location>
        <begin position="779"/>
        <end position="781"/>
    </location>
</feature>
<feature type="transmembrane region" description="Helical" evidence="5">
    <location>
        <begin position="782"/>
        <end position="803"/>
    </location>
</feature>
<feature type="topological domain" description="Lumenal" evidence="5">
    <location>
        <begin position="804"/>
        <end position="813"/>
    </location>
</feature>
<feature type="transmembrane region" description="Helical" evidence="12">
    <location>
        <begin position="814"/>
        <end position="834"/>
    </location>
</feature>
<feature type="topological domain" description="Cytoplasmic" evidence="12">
    <location>
        <begin position="835"/>
        <end position="838"/>
    </location>
</feature>
<feature type="transmembrane region" description="Helical" evidence="12">
    <location>
        <begin position="839"/>
        <end position="859"/>
    </location>
</feature>
<feature type="topological domain" description="Lumenal" evidence="12">
    <location>
        <begin position="860"/>
        <end position="881"/>
    </location>
</feature>
<feature type="transmembrane region" description="Helical" evidence="12">
    <location>
        <begin position="882"/>
        <end position="902"/>
    </location>
</feature>
<feature type="topological domain" description="Cytoplasmic" evidence="12">
    <location>
        <begin position="903"/>
        <end position="1657"/>
    </location>
</feature>
<feature type="transmembrane region" description="Helical" evidence="13">
    <location>
        <begin position="1658"/>
        <end position="1678"/>
    </location>
</feature>
<feature type="topological domain" description="Cytoplasmic" evidence="13">
    <location>
        <begin position="1679"/>
        <end position="1805"/>
    </location>
</feature>
<feature type="transmembrane region" description="Helical" evidence="13">
    <location>
        <begin position="1806"/>
        <end position="1824"/>
    </location>
</feature>
<feature type="topological domain" description="Lumenal" evidence="5">
    <location>
        <begin position="1825"/>
        <end position="1828"/>
    </location>
</feature>
<feature type="transmembrane region" description="Helical" evidence="13">
    <location>
        <begin position="1829"/>
        <end position="1849"/>
    </location>
</feature>
<feature type="topological domain" description="Cytoplasmic" evidence="13">
    <location>
        <position position="1850"/>
    </location>
</feature>
<feature type="transmembrane region" description="Helical" evidence="13">
    <location>
        <begin position="1851"/>
        <end position="1871"/>
    </location>
</feature>
<feature type="topological domain" description="Lumenal" evidence="13">
    <location>
        <begin position="1872"/>
        <end position="1881"/>
    </location>
</feature>
<feature type="transmembrane region" description="Helical" evidence="13">
    <location>
        <begin position="1882"/>
        <end position="1902"/>
    </location>
</feature>
<feature type="topological domain" description="Cytoplasmic" evidence="13">
    <location>
        <begin position="1903"/>
        <end position="1972"/>
    </location>
</feature>
<feature type="intramembrane region" evidence="5">
    <location>
        <begin position="1973"/>
        <end position="2002"/>
    </location>
</feature>
<feature type="topological domain" description="Cytoplasmic" evidence="5">
    <location>
        <begin position="2003"/>
        <end position="2989"/>
    </location>
</feature>
<feature type="transmembrane region" description="Helical" evidence="5">
    <location>
        <begin position="2990"/>
        <end position="3010"/>
    </location>
</feature>
<feature type="domain" description="Peptidase C18" evidence="16">
    <location>
        <begin position="903"/>
        <end position="1026"/>
    </location>
</feature>
<feature type="domain" description="Peptidase S29" evidence="17">
    <location>
        <begin position="1027"/>
        <end position="1208"/>
    </location>
</feature>
<feature type="domain" description="Helicase ATP-binding" evidence="15">
    <location>
        <begin position="1217"/>
        <end position="1369"/>
    </location>
</feature>
<feature type="domain" description="RdRp catalytic" evidence="14">
    <location>
        <begin position="2633"/>
        <end position="2751"/>
    </location>
</feature>
<feature type="region of interest" description="Disordered" evidence="5">
    <location>
        <begin position="2"/>
        <end position="75"/>
    </location>
</feature>
<feature type="region of interest" description="Interaction with DDX3X" evidence="9">
    <location>
        <begin position="2"/>
        <end position="59"/>
    </location>
</feature>
<feature type="region of interest" description="Interaction with EIF2AK2/PKR" evidence="2">
    <location>
        <begin position="2"/>
        <end position="58"/>
    </location>
</feature>
<feature type="region of interest" description="Interaction with STAT1" evidence="2">
    <location>
        <begin position="2"/>
        <end position="23"/>
    </location>
</feature>
<feature type="region of interest" description="Important for endoplasmic reticulum and mitochondrial localization" evidence="2">
    <location>
        <begin position="112"/>
        <end position="152"/>
    </location>
</feature>
<feature type="region of interest" description="Interaction with APOA2" evidence="6">
    <location>
        <begin position="122"/>
        <end position="173"/>
    </location>
</feature>
<feature type="region of interest" description="Important for lipid droplets localization" evidence="5">
    <location>
        <begin position="164"/>
        <end position="167"/>
    </location>
</feature>
<feature type="region of interest" description="Important for fusion" evidence="5">
    <location>
        <begin position="265"/>
        <end position="296"/>
    </location>
</feature>
<feature type="region of interest" description="HVR1" evidence="5">
    <location>
        <begin position="385"/>
        <end position="411"/>
    </location>
</feature>
<feature type="region of interest" description="HVR2" evidence="5">
    <location>
        <begin position="474"/>
        <end position="479"/>
    </location>
</feature>
<feature type="region of interest" description="CD81-binding 1" evidence="3">
    <location>
        <begin position="480"/>
        <end position="493"/>
    </location>
</feature>
<feature type="region of interest" description="CD81-binding 2" evidence="3">
    <location>
        <begin position="544"/>
        <end position="551"/>
    </location>
</feature>
<feature type="region of interest" description="PKR/eIF2-alpha phosphorylation homology domain (PePHD)" evidence="1">
    <location>
        <begin position="660"/>
        <end position="671"/>
    </location>
</feature>
<feature type="region of interest" description="Protease NS2-3" evidence="3">
    <location>
        <begin position="904"/>
        <end position="1206"/>
    </location>
</feature>
<feature type="region of interest" description="Interaction with host SCPS1" evidence="11">
    <location>
        <begin position="929"/>
        <end position="949"/>
    </location>
</feature>
<feature type="region of interest" description="RNA-binding" evidence="3">
    <location>
        <begin position="1486"/>
        <end position="1497"/>
    </location>
</feature>
<feature type="region of interest" description="NS3-binding" evidence="5">
    <location>
        <begin position="1679"/>
        <end position="1690"/>
    </location>
</feature>
<feature type="region of interest" description="Transcriptional activation" evidence="13">
    <location>
        <begin position="2120"/>
        <end position="2332"/>
    </location>
</feature>
<feature type="region of interest" description="FKBP8-binding" evidence="2">
    <location>
        <begin position="2120"/>
        <end position="2208"/>
    </location>
</feature>
<feature type="region of interest" description="Interaction with non-structural protein 4A" evidence="2">
    <location>
        <begin position="2135"/>
        <end position="2139"/>
    </location>
</feature>
<feature type="region of interest" description="Disordered" evidence="18">
    <location>
        <begin position="2187"/>
        <end position="2219"/>
    </location>
</feature>
<feature type="region of interest" description="Interaction with host SKP2" evidence="5">
    <location>
        <begin position="2189"/>
        <end position="2441"/>
    </location>
</feature>
<feature type="region of interest" description="Interaction with EIF2AK2/PKR" evidence="3">
    <location>
        <begin position="2210"/>
        <end position="2275"/>
    </location>
</feature>
<feature type="region of interest" description="ISDR" evidence="2">
    <location>
        <begin position="2210"/>
        <end position="2249"/>
    </location>
</feature>
<feature type="region of interest" description="NS4B-binding" evidence="13">
    <location>
        <begin position="2249"/>
        <end position="2306"/>
    </location>
</feature>
<feature type="region of interest" description="Disordered" evidence="18">
    <location>
        <begin position="2351"/>
        <end position="2407"/>
    </location>
</feature>
<feature type="region of interest" description="V3" evidence="1">
    <location>
        <begin position="2354"/>
        <end position="2377"/>
    </location>
</feature>
<feature type="short sequence motif" description="Nuclear localization signal" evidence="11">
    <location>
        <begin position="5"/>
        <end position="13"/>
    </location>
</feature>
<feature type="short sequence motif" description="Nuclear localization signal" evidence="11">
    <location>
        <begin position="38"/>
        <end position="43"/>
    </location>
</feature>
<feature type="short sequence motif" description="Nuclear localization signal" evidence="11">
    <location>
        <begin position="58"/>
        <end position="64"/>
    </location>
</feature>
<feature type="short sequence motif" description="Nuclear localization signal" evidence="11">
    <location>
        <begin position="66"/>
        <end position="71"/>
    </location>
</feature>
<feature type="short sequence motif" description="DECH box" evidence="11">
    <location>
        <begin position="1316"/>
        <end position="1319"/>
    </location>
</feature>
<feature type="short sequence motif" description="SH3-binding" evidence="13">
    <location>
        <begin position="2322"/>
        <end position="2325"/>
    </location>
</feature>
<feature type="short sequence motif" description="Nuclear localization signal" evidence="2">
    <location>
        <begin position="2326"/>
        <end position="2334"/>
    </location>
</feature>
<feature type="compositionally biased region" description="Basic residues" evidence="18">
    <location>
        <begin position="7"/>
        <end position="16"/>
    </location>
</feature>
<feature type="compositionally biased region" description="Low complexity" evidence="18">
    <location>
        <begin position="32"/>
        <end position="47"/>
    </location>
</feature>
<feature type="compositionally biased region" description="Basic residues" evidence="18">
    <location>
        <begin position="58"/>
        <end position="68"/>
    </location>
</feature>
<feature type="compositionally biased region" description="Low complexity" evidence="18">
    <location>
        <begin position="2194"/>
        <end position="2211"/>
    </location>
</feature>
<feature type="compositionally biased region" description="Polar residues" evidence="18">
    <location>
        <begin position="2351"/>
        <end position="2365"/>
    </location>
</feature>
<feature type="active site" description="For protease NS2 activity; shared with dimeric partner" evidence="16">
    <location>
        <position position="952"/>
    </location>
</feature>
<feature type="active site" description="For protease NS2 activity; shared with dimeric partner" evidence="16">
    <location>
        <position position="972"/>
    </location>
</feature>
<feature type="active site" description="For protease NS2 activity; shared with dimeric partner" evidence="16">
    <location>
        <position position="993"/>
    </location>
</feature>
<feature type="active site" description="Charge relay system; for serine protease NS3 activity" evidence="17">
    <location>
        <position position="1083"/>
    </location>
</feature>
<feature type="active site" description="Charge relay system; for serine protease NS3 activity" evidence="17">
    <location>
        <position position="1107"/>
    </location>
</feature>
<feature type="active site" description="Charge relay system; for serine protease NS3 activity" evidence="17 21">
    <location>
        <position position="1165"/>
    </location>
</feature>
<feature type="binding site" evidence="17 21">
    <location>
        <position position="1123"/>
    </location>
    <ligand>
        <name>Zn(2+)</name>
        <dbReference type="ChEBI" id="CHEBI:29105"/>
        <label>1</label>
        <note>structural; for NS3 protease activity and NS2/3 auto-cleavage activity</note>
    </ligand>
</feature>
<feature type="binding site" evidence="17 21">
    <location>
        <position position="1125"/>
    </location>
    <ligand>
        <name>Zn(2+)</name>
        <dbReference type="ChEBI" id="CHEBI:29105"/>
        <label>1</label>
        <note>structural; for NS3 protease activity and NS2/3 auto-cleavage activity</note>
    </ligand>
</feature>
<feature type="binding site" evidence="17 21">
    <location>
        <position position="1171"/>
    </location>
    <ligand>
        <name>Zn(2+)</name>
        <dbReference type="ChEBI" id="CHEBI:29105"/>
        <label>1</label>
        <note>structural; for NS3 protease activity and NS2/3 auto-cleavage activity</note>
    </ligand>
</feature>
<feature type="binding site" evidence="17 21">
    <location>
        <position position="1175"/>
    </location>
    <ligand>
        <name>Zn(2+)</name>
        <dbReference type="ChEBI" id="CHEBI:29105"/>
        <label>1</label>
        <note>structural; for NS3 protease activity and NS2/3 auto-cleavage activity</note>
    </ligand>
</feature>
<feature type="binding site" evidence="15">
    <location>
        <begin position="1230"/>
        <end position="1237"/>
    </location>
    <ligand>
        <name>ATP</name>
        <dbReference type="ChEBI" id="CHEBI:30616"/>
    </ligand>
</feature>
<feature type="binding site" evidence="12">
    <location>
        <position position="1237"/>
    </location>
    <ligand>
        <name>Mg(2+)</name>
        <dbReference type="ChEBI" id="CHEBI:18420"/>
        <label>1</label>
        <note>catalytic; for NS3 helicase activity</note>
    </ligand>
</feature>
<feature type="binding site" evidence="12">
    <location>
        <position position="1317"/>
    </location>
    <ligand>
        <name>Mg(2+)</name>
        <dbReference type="ChEBI" id="CHEBI:18420"/>
        <label>1</label>
        <note>catalytic; for NS3 helicase activity</note>
    </ligand>
</feature>
<feature type="binding site" evidence="12">
    <location>
        <position position="2011"/>
    </location>
    <ligand>
        <name>Zn(2+)</name>
        <dbReference type="ChEBI" id="CHEBI:29105"/>
        <label>2</label>
        <note>structural</note>
    </ligand>
</feature>
<feature type="binding site" evidence="12">
    <location>
        <position position="2029"/>
    </location>
    <ligand>
        <name>Zn(2+)</name>
        <dbReference type="ChEBI" id="CHEBI:29105"/>
        <label>2</label>
        <note>structural</note>
    </ligand>
</feature>
<feature type="binding site" evidence="12">
    <location>
        <position position="2031"/>
    </location>
    <ligand>
        <name>Zn(2+)</name>
        <dbReference type="ChEBI" id="CHEBI:29105"/>
        <label>2</label>
        <note>structural</note>
    </ligand>
</feature>
<feature type="binding site" evidence="12">
    <location>
        <position position="2052"/>
    </location>
    <ligand>
        <name>Zn(2+)</name>
        <dbReference type="ChEBI" id="CHEBI:29105"/>
        <label>2</label>
        <note>structural</note>
    </ligand>
</feature>
<feature type="binding site" evidence="3">
    <location>
        <position position="2639"/>
    </location>
    <ligand>
        <name>Mg(2+)</name>
        <dbReference type="ChEBI" id="CHEBI:18420"/>
        <label>2</label>
        <note>catalytic; for RNA-directed RNA polymerase activity</note>
    </ligand>
</feature>
<feature type="binding site" evidence="3">
    <location>
        <position position="2737"/>
    </location>
    <ligand>
        <name>Mg(2+)</name>
        <dbReference type="ChEBI" id="CHEBI:18420"/>
        <label>2</label>
        <note>catalytic; for RNA-directed RNA polymerase activity</note>
    </ligand>
</feature>
<feature type="binding site" evidence="3">
    <location>
        <position position="2738"/>
    </location>
    <ligand>
        <name>Mg(2+)</name>
        <dbReference type="ChEBI" id="CHEBI:18420"/>
        <label>2</label>
        <note>catalytic; for RNA-directed RNA polymerase activity</note>
    </ligand>
</feature>
<feature type="site" description="Cleavage; by host signal peptide peptidase" evidence="2">
    <location>
        <begin position="177"/>
        <end position="178"/>
    </location>
</feature>
<feature type="site" description="Cleavage; by host signal peptidase" evidence="2">
    <location>
        <begin position="191"/>
        <end position="192"/>
    </location>
</feature>
<feature type="site" description="Cleavage; by host signal peptidase" evidence="2">
    <location>
        <begin position="383"/>
        <end position="384"/>
    </location>
</feature>
<feature type="site" description="Cleavage; by host signal peptidase" evidence="1">
    <location>
        <begin position="746"/>
        <end position="747"/>
    </location>
</feature>
<feature type="site" description="Cleavage; by host signal peptidase" evidence="1">
    <location>
        <begin position="809"/>
        <end position="810"/>
    </location>
</feature>
<feature type="site" description="Cleavage; by protease NS2" evidence="16">
    <location>
        <begin position="1026"/>
        <end position="1027"/>
    </location>
</feature>
<feature type="site" description="Cleavage; by serine protease/helicase NS3" evidence="5">
    <location>
        <begin position="1657"/>
        <end position="1658"/>
    </location>
</feature>
<feature type="site" description="Cleavage; by serine protease/helicase NS3" evidence="5">
    <location>
        <begin position="1711"/>
        <end position="1712"/>
    </location>
</feature>
<feature type="site" description="Cleavage; by serine protease/helicase NS3" evidence="5">
    <location>
        <begin position="1972"/>
        <end position="1973"/>
    </location>
</feature>
<feature type="site" description="Cleavage; by serine protease/helicase NS3" evidence="5">
    <location>
        <begin position="2419"/>
        <end position="2420"/>
    </location>
</feature>
<feature type="modified residue" description="N-acetylserine; by host" evidence="10">
    <location>
        <position position="2"/>
    </location>
</feature>
<feature type="modified residue" description="Phosphoserine; by host" evidence="7">
    <location>
        <position position="53"/>
    </location>
</feature>
<feature type="modified residue" description="Phosphoserine; by host" evidence="7">
    <location>
        <position position="99"/>
    </location>
</feature>
<feature type="modified residue" description="Phosphoserine; by host PKA" evidence="7">
    <location>
        <position position="116"/>
    </location>
</feature>
<feature type="modified residue" description="Phosphoserine; by host; in p56" evidence="12">
    <location>
        <position position="2194"/>
    </location>
</feature>
<feature type="modified residue" description="Phosphoserine; by host; in p58" evidence="12">
    <location>
        <position position="2197"/>
    </location>
</feature>
<feature type="modified residue" description="Phosphoserine; by host; in p58" evidence="12">
    <location>
        <position position="2201"/>
    </location>
</feature>
<feature type="modified residue" description="Phosphoserine; by host; in p58" evidence="12">
    <location>
        <position position="2204"/>
    </location>
</feature>
<feature type="modified residue" description="Phosphoserine; by host; in p58" evidence="11">
    <location>
        <position position="2207"/>
    </location>
</feature>
<feature type="modified residue" description="Phosphoserine; by host; in p58" evidence="11">
    <location>
        <position position="2210"/>
    </location>
</feature>
<feature type="modified residue" description="Phosphoserine; by host" evidence="2">
    <location>
        <position position="2448"/>
    </location>
</feature>
<feature type="modified residue" description="Phosphoserine; by host" evidence="2">
    <location>
        <position position="2461"/>
    </location>
</feature>
<feature type="lipid moiety-binding region" description="S-palmitoyl cysteine; by host" evidence="5">
    <location>
        <position position="922"/>
    </location>
</feature>
<feature type="lipid moiety-binding region" description="S-palmitoyl cysteine; by host" evidence="5">
    <location>
        <position position="1968"/>
    </location>
</feature>
<feature type="lipid moiety-binding region" description="S-palmitoyl cysteine; by host" evidence="5">
    <location>
        <position position="1972"/>
    </location>
</feature>
<feature type="glycosylation site" description="N-linked (GlcNAc...) asparagine; by host" evidence="5">
    <location>
        <position position="196"/>
    </location>
</feature>
<feature type="glycosylation site" description="N-linked (GlcNAc...) asparagine; by host" evidence="5">
    <location>
        <position position="209"/>
    </location>
</feature>
<feature type="glycosylation site" description="N-linked (GlcNAc...) asparagine; by host" evidence="5">
    <location>
        <position position="234"/>
    </location>
</feature>
<feature type="glycosylation site" description="N-linked (GlcNAc...) asparagine; by host" evidence="5">
    <location>
        <position position="250"/>
    </location>
</feature>
<feature type="glycosylation site" description="N-linked (GlcNAc...) asparagine; by host" evidence="13">
    <location>
        <position position="305"/>
    </location>
</feature>
<feature type="glycosylation site" description="N-linked (GlcNAc...) (high mannose) asparagine; by host" evidence="5">
    <location>
        <position position="417"/>
    </location>
</feature>
<feature type="glycosylation site" description="N-linked (GlcNAc...) (high mannose) asparagine; by host" evidence="5">
    <location>
        <position position="423"/>
    </location>
</feature>
<feature type="glycosylation site" description="N-linked (GlcNAc...) (high mannose) asparagine; by host" evidence="5">
    <location>
        <position position="430"/>
    </location>
</feature>
<feature type="glycosylation site" description="N-linked (GlcNAc...) (high mannose) asparagine; by host" evidence="5">
    <location>
        <position position="448"/>
    </location>
</feature>
<feature type="glycosylation site" description="N-linked (GlcNAc...) asparagine; by host" evidence="13">
    <location>
        <position position="478"/>
    </location>
</feature>
<feature type="glycosylation site" description="N-linked (GlcNAc...) (high mannose) asparagine; by host" evidence="5">
    <location>
        <position position="532"/>
    </location>
</feature>
<feature type="glycosylation site" description="N-linked (GlcNAc...) asparagine; by host" evidence="13">
    <location>
        <position position="540"/>
    </location>
</feature>
<feature type="glycosylation site" description="N-linked (GlcNAc...) (high mannose) asparagine; by host" evidence="5">
    <location>
        <position position="556"/>
    </location>
</feature>
<feature type="glycosylation site" description="N-linked (GlcNAc...) (high mannose) asparagine; by host" evidence="5">
    <location>
        <position position="576"/>
    </location>
</feature>
<feature type="glycosylation site" description="N-linked (GlcNAc...) (high mannose) asparagine; by host" evidence="5">
    <location>
        <position position="623"/>
    </location>
</feature>
<feature type="glycosylation site" description="N-linked (GlcNAc...) (high mannose) asparagine; by host" evidence="5">
    <location>
        <position position="645"/>
    </location>
</feature>
<feature type="disulfide bond" evidence="5">
    <location>
        <begin position="429"/>
        <end position="552"/>
    </location>
</feature>
<feature type="disulfide bond" evidence="5">
    <location>
        <begin position="452"/>
        <end position="459"/>
    </location>
</feature>
<feature type="disulfide bond" evidence="5">
    <location>
        <begin position="486"/>
        <end position="494"/>
    </location>
</feature>
<feature type="disulfide bond" evidence="5">
    <location>
        <begin position="503"/>
        <end position="508"/>
    </location>
</feature>
<feature type="disulfide bond" evidence="5">
    <location>
        <begin position="564"/>
        <end position="569"/>
    </location>
</feature>
<feature type="disulfide bond" evidence="5">
    <location>
        <begin position="581"/>
        <end position="585"/>
    </location>
</feature>
<feature type="disulfide bond" evidence="5">
    <location>
        <begin position="597"/>
        <end position="620"/>
    </location>
</feature>
<feature type="disulfide bond" evidence="5">
    <location>
        <begin position="607"/>
        <end position="644"/>
    </location>
</feature>
<feature type="disulfide bond" evidence="5">
    <location>
        <begin position="652"/>
        <end position="677"/>
    </location>
</feature>
<feature type="cross-link" description="Glycyl lysine isopeptide (Lys-Gly) (interchain with G-Cter in ubiquitin)" evidence="5">
    <location>
        <position position="2350"/>
    </location>
</feature>
<feature type="sequence variant" description="In strain: Isolate pCV-J4L4S and Isolate HC-J4/91.">
    <original>A</original>
    <variation>T</variation>
    <location>
        <position position="52"/>
    </location>
</feature>
<feature type="sequence variant" description="In strain: Isolate HC-J4/91.">
    <original>R</original>
    <variation>Q</variation>
    <location>
        <position position="70"/>
    </location>
</feature>
<feature type="sequence variant" description="In strain: Isolate pCV-J4L2S and Isolate pCV-J4L6S.">
    <original>R</original>
    <variation>Q</variation>
    <location>
        <position position="231"/>
    </location>
</feature>
<feature type="sequence variant" description="In strain: Isolate HC-J4/91 and Isolate pCV-J4L4S.">
    <original>N</original>
    <variation>D</variation>
    <location>
        <position position="250"/>
    </location>
</feature>
<feature type="sequence variant" description="In strain: Isolate pCV-J4L2S.">
    <original>C</original>
    <variation>Y</variation>
    <location>
        <position position="304"/>
    </location>
</feature>
<feature type="sequence variant" description="In strain: Isolate HC-J4/91.">
    <original>ETHTTGR</original>
    <variation>ATYTSGG</variation>
    <location>
        <begin position="384"/>
        <end position="390"/>
    </location>
</feature>
<feature type="sequence variant" description="In strain: Isolate HC-J4/91 and Isolate pCV-J4L4S.">
    <original>H</original>
    <variation>R</variation>
    <location>
        <position position="394"/>
    </location>
</feature>
<feature type="sequence variant" description="In strain: Isolate HC-J4/91.">
    <original>Q</original>
    <variation>H</variation>
    <location>
        <position position="434"/>
    </location>
</feature>
<feature type="sequence variant" description="In strain: Isolate pCV-J4L4S.">
    <original>F</original>
    <variation>L</variation>
    <location>
        <position position="438"/>
    </location>
</feature>
<feature type="sequence variant" description="In strain: Isolate pCV-J4L4S and Isolate HC-J4/91.">
    <original>A</original>
    <variation>T</variation>
    <location>
        <position position="444"/>
    </location>
</feature>
<feature type="sequence variant" description="In strain: Isolate pCV-J4L4S.">
    <original>S</original>
    <variation>P</variation>
    <location>
        <position position="450"/>
    </location>
</feature>
<feature type="sequence variant" description="In strain: Isolate HC-J4/91.">
    <original>W</original>
    <variation>G</variation>
    <location>
        <position position="464"/>
    </location>
</feature>
<feature type="sequence variant" description="In strain: Isolate pCV-J4L4S and Isolate HC-J4/91.">
    <original>K</original>
    <variation>E</variation>
    <location>
        <position position="476"/>
    </location>
</feature>
<feature type="sequence variant" description="In strain: Isolate HC-J4/91.">
    <original>S</original>
    <variation>P</variation>
    <location>
        <position position="480"/>
    </location>
</feature>
<feature type="sequence variant" description="In strain: Isolate pCV-J4L4S and Isolate HC-J4/91.">
    <original>V</original>
    <variation>I</variation>
    <location>
        <position position="496"/>
    </location>
</feature>
<feature type="sequence variant" description="In strain: Isolate pCV-J4L2S.">
    <original>V</original>
    <variation>M</variation>
    <location>
        <position position="536"/>
    </location>
</feature>
<feature type="sequence variant" description="In strain: Isolate pCV-J4L2S.">
    <original>V</original>
    <variation>I</variation>
    <location>
        <position position="934"/>
    </location>
</feature>
<feature type="sequence variant" description="In strain: Isolate pCV-J4L6S.">
    <original>A</original>
    <variation>V</variation>
    <location>
        <position position="937"/>
    </location>
</feature>
<feature type="sequence variant" description="In strain: Isolate pCV-J4L2S and Isolate pCV-J4L4S.">
    <original>I</original>
    <variation>V</variation>
    <location>
        <position position="1043"/>
    </location>
</feature>
<feature type="sequence variant" description="In strain: Isolate pCV-J4L6S.">
    <original>S</original>
    <variation>T</variation>
    <location>
        <position position="1215"/>
    </location>
</feature>
<feature type="sequence variant" description="In strain: Isolate pCV-J4L2S.">
    <original>F</original>
    <variation>S</variation>
    <location>
        <position position="1223"/>
    </location>
</feature>
<feature type="sequence variant" description="In strain: Isolate pCV-J4L4S.">
    <original>Y</original>
    <variation>H</variation>
    <location>
        <position position="1528"/>
    </location>
</feature>
<feature type="sequence variant" description="In strain: Isolate pCV-J4L2S.">
    <original>L</original>
    <variation>P</variation>
    <location>
        <position position="1662"/>
    </location>
</feature>
<feature type="sequence variant" description="In strain: Isolate pCV-J4L2S.">
    <original>K</original>
    <variation>R</variation>
    <location>
        <position position="1753"/>
    </location>
</feature>
<feature type="sequence variant" description="In strain: Isolate pCV-J4L2S.">
    <original>N</original>
    <variation>H</variation>
    <location>
        <position position="1805"/>
    </location>
</feature>
<feature type="sequence variant" description="In strain: Isolate pCV-J4L4S.">
    <original>S</original>
    <variation>P</variation>
    <location>
        <position position="1949"/>
    </location>
</feature>
<feature type="sequence variant" description="In strain: Isolate pCV-J4L4S.">
    <original>K</original>
    <variation>R</variation>
    <location>
        <position position="2138"/>
    </location>
</feature>
<feature type="sequence variant" description="In strain: Isolate pCV-J4L4S.">
    <original>Y</original>
    <variation>H</variation>
    <location>
        <position position="2385"/>
    </location>
</feature>
<feature type="sequence variant" description="In strain: Isolate pCV-J4L2S.">
    <original>C</original>
    <variation>R</variation>
    <location>
        <position position="2785"/>
    </location>
</feature>
<feature type="sequence variant" description="In strain: Isolate pCV-J4L2S.">
    <original>I</original>
    <variation>V</variation>
    <location>
        <position position="2824"/>
    </location>
</feature>
<feature type="sequence variant" description="In strain: Isolate HC-J4/91.">
    <original>S</original>
    <variation>F</variation>
    <location>
        <position position="2999"/>
    </location>
</feature>
<feature type="mutagenesis site" description="Almost complete loss of NS2/3 auto-cleavage activity; slight loss of NS3 protease activity." evidence="21">
    <original>C</original>
    <variation>A</variation>
    <location>
        <position position="922"/>
    </location>
</feature>
<feature type="mutagenesis site" description="Almost complete loss of NS3 protease activity and NS2/3 auto-cleavage activity." evidence="21">
    <original>C</original>
    <variation>A</variation>
    <location>
        <position position="1123"/>
    </location>
</feature>
<feature type="mutagenesis site" description="Almost complete loss of NS3 protease activity and NS2/3 auto-cleavage activity." evidence="21">
    <original>C</original>
    <variation>A</variation>
    <location>
        <position position="1125"/>
    </location>
</feature>
<feature type="mutagenesis site" description="Almost complete loss of NS3 protease activity; no effect on NS2/3 auto-cleavage activity." evidence="21">
    <original>S</original>
    <variation>A</variation>
    <location>
        <position position="1165"/>
    </location>
</feature>
<feature type="mutagenesis site" description="Almost complete loss of NS3 protease activity and NS2/3 auto-cleavage activity." evidence="21">
    <original>C</original>
    <variation>A</variation>
    <location>
        <position position="1171"/>
    </location>
</feature>
<feature type="mutagenesis site" description="Slight loss of NS2/3 auto-cleavage activity and 70% loss of NS3 protease activity." evidence="21">
    <original>H</original>
    <variation>A</variation>
    <location>
        <position position="1175"/>
    </location>
</feature>
<feature type="mutagenesis site" description="No effect on NS2/3 auto-cleavage activity; slight loss of NS3 protease activity." evidence="21">
    <original>C</original>
    <variation>A</variation>
    <location>
        <position position="1185"/>
    </location>
</feature>
<feature type="helix" evidence="34">
    <location>
        <begin position="535"/>
        <end position="538"/>
    </location>
</feature>
<feature type="helix" evidence="26">
    <location>
        <begin position="750"/>
        <end position="760"/>
    </location>
</feature>
<feature type="helix" evidence="26">
    <location>
        <begin position="762"/>
        <end position="767"/>
    </location>
</feature>
<feature type="helix" evidence="26">
    <location>
        <begin position="769"/>
        <end position="777"/>
    </location>
</feature>
<feature type="helix" evidence="26">
    <location>
        <begin position="786"/>
        <end position="789"/>
    </location>
</feature>
<feature type="helix" evidence="26">
    <location>
        <begin position="790"/>
        <end position="792"/>
    </location>
</feature>
<feature type="helix" evidence="26">
    <location>
        <begin position="797"/>
        <end position="802"/>
    </location>
</feature>
<feature type="strand" evidence="25">
    <location>
        <begin position="1224"/>
        <end position="1227"/>
    </location>
</feature>
<feature type="strand" evidence="25">
    <location>
        <begin position="1232"/>
        <end position="1235"/>
    </location>
</feature>
<feature type="turn" evidence="25">
    <location>
        <begin position="1236"/>
        <end position="1238"/>
    </location>
</feature>
<feature type="helix" evidence="25">
    <location>
        <begin position="1239"/>
        <end position="1245"/>
    </location>
</feature>
<feature type="turn" evidence="25">
    <location>
        <begin position="1246"/>
        <end position="1248"/>
    </location>
</feature>
<feature type="strand" evidence="25">
    <location>
        <begin position="1251"/>
        <end position="1256"/>
    </location>
</feature>
<feature type="helix" evidence="25">
    <location>
        <begin position="1258"/>
        <end position="1270"/>
    </location>
</feature>
<feature type="strand" evidence="25">
    <location>
        <begin position="1277"/>
        <end position="1279"/>
    </location>
</feature>
<feature type="strand" evidence="25">
    <location>
        <begin position="1292"/>
        <end position="1295"/>
    </location>
</feature>
<feature type="helix" evidence="25">
    <location>
        <begin position="1296"/>
        <end position="1301"/>
    </location>
</feature>
<feature type="turn" evidence="25">
    <location>
        <begin position="1302"/>
        <end position="1306"/>
    </location>
</feature>
<feature type="strand" evidence="25">
    <location>
        <begin position="1311"/>
        <end position="1315"/>
    </location>
</feature>
<feature type="helix" evidence="25">
    <location>
        <begin position="1323"/>
        <end position="1335"/>
    </location>
</feature>
<feature type="helix" evidence="25">
    <location>
        <begin position="1337"/>
        <end position="1339"/>
    </location>
</feature>
<feature type="strand" evidence="25">
    <location>
        <begin position="1342"/>
        <end position="1346"/>
    </location>
</feature>
<feature type="strand" evidence="25">
    <location>
        <begin position="1362"/>
        <end position="1366"/>
    </location>
</feature>
<feature type="helix" evidence="25">
    <location>
        <begin position="1382"/>
        <end position="1385"/>
    </location>
</feature>
<feature type="strand" evidence="25">
    <location>
        <begin position="1386"/>
        <end position="1393"/>
    </location>
</feature>
<feature type="helix" evidence="25">
    <location>
        <begin position="1397"/>
        <end position="1408"/>
    </location>
</feature>
<feature type="turn" evidence="25">
    <location>
        <begin position="1409"/>
        <end position="1411"/>
    </location>
</feature>
<feature type="strand" evidence="25">
    <location>
        <begin position="1414"/>
        <end position="1417"/>
    </location>
</feature>
<feature type="helix" evidence="25">
    <location>
        <begin position="1423"/>
        <end position="1425"/>
    </location>
</feature>
<feature type="strand" evidence="25">
    <location>
        <begin position="1428"/>
        <end position="1436"/>
    </location>
</feature>
<feature type="strand" evidence="25">
    <location>
        <begin position="1448"/>
        <end position="1453"/>
    </location>
</feature>
<feature type="strand" evidence="25">
    <location>
        <begin position="1456"/>
        <end position="1462"/>
    </location>
</feature>
<feature type="strand" evidence="25">
    <location>
        <begin position="1467"/>
        <end position="1469"/>
    </location>
</feature>
<feature type="strand" evidence="25">
    <location>
        <begin position="1471"/>
        <end position="1478"/>
    </location>
</feature>
<feature type="helix" evidence="25">
    <location>
        <begin position="1483"/>
        <end position="1486"/>
    </location>
</feature>
<feature type="helix" evidence="25">
    <location>
        <begin position="1488"/>
        <end position="1490"/>
    </location>
</feature>
<feature type="strand" evidence="25">
    <location>
        <begin position="1491"/>
        <end position="1495"/>
    </location>
</feature>
<feature type="strand" evidence="25">
    <location>
        <begin position="1497"/>
        <end position="1503"/>
    </location>
</feature>
<feature type="helix" evidence="25">
    <location>
        <begin position="1514"/>
        <end position="1525"/>
    </location>
</feature>
<feature type="helix" evidence="25">
    <location>
        <begin position="1532"/>
        <end position="1543"/>
    </location>
</feature>
<feature type="helix" evidence="25">
    <location>
        <begin position="1555"/>
        <end position="1563"/>
    </location>
</feature>
<feature type="helix" evidence="25">
    <location>
        <begin position="1570"/>
        <end position="1577"/>
    </location>
</feature>
<feature type="turn" evidence="25">
    <location>
        <begin position="1578"/>
        <end position="1580"/>
    </location>
</feature>
<feature type="helix" evidence="25">
    <location>
        <begin position="1584"/>
        <end position="1596"/>
    </location>
</feature>
<feature type="helix" evidence="25">
    <location>
        <begin position="1615"/>
        <end position="1617"/>
    </location>
</feature>
<feature type="strand" evidence="25">
    <location>
        <begin position="1627"/>
        <end position="1629"/>
    </location>
</feature>
<feature type="helix" evidence="25">
    <location>
        <begin position="1640"/>
        <end position="1648"/>
    </location>
</feature>
<feature type="strand" evidence="28">
    <location>
        <begin position="2421"/>
        <end position="2425"/>
    </location>
</feature>
<feature type="helix" evidence="28">
    <location>
        <begin position="2444"/>
        <end position="2449"/>
    </location>
</feature>
<feature type="helix" evidence="28">
    <location>
        <begin position="2453"/>
        <end position="2455"/>
    </location>
</feature>
<feature type="strand" evidence="28">
    <location>
        <begin position="2456"/>
        <end position="2458"/>
    </location>
</feature>
<feature type="helix" evidence="28">
    <location>
        <begin position="2461"/>
        <end position="2463"/>
    </location>
</feature>
<feature type="helix" evidence="28">
    <location>
        <begin position="2464"/>
        <end position="2471"/>
    </location>
</feature>
<feature type="helix" evidence="28">
    <location>
        <begin position="2481"/>
        <end position="2494"/>
    </location>
</feature>
<feature type="helix" evidence="28">
    <location>
        <begin position="2504"/>
        <end position="2509"/>
    </location>
</feature>
<feature type="strand" evidence="31">
    <location>
        <begin position="2513"/>
        <end position="2515"/>
    </location>
</feature>
<feature type="strand" evidence="30">
    <location>
        <begin position="2519"/>
        <end position="2521"/>
    </location>
</feature>
<feature type="helix" evidence="28">
    <location>
        <begin position="2524"/>
        <end position="2528"/>
    </location>
</feature>
<feature type="helix" evidence="28">
    <location>
        <begin position="2532"/>
        <end position="2547"/>
    </location>
</feature>
<feature type="strand" evidence="28">
    <location>
        <begin position="2549"/>
        <end position="2551"/>
    </location>
</feature>
<feature type="strand" evidence="28">
    <location>
        <begin position="2555"/>
        <end position="2559"/>
    </location>
</feature>
<feature type="strand" evidence="28">
    <location>
        <begin position="2563"/>
        <end position="2565"/>
    </location>
</feature>
<feature type="turn" evidence="27">
    <location>
        <begin position="2568"/>
        <end position="2570"/>
    </location>
</feature>
<feature type="strand" evidence="28">
    <location>
        <begin position="2578"/>
        <end position="2581"/>
    </location>
</feature>
<feature type="helix" evidence="28">
    <location>
        <begin position="2584"/>
        <end position="2606"/>
    </location>
</feature>
<feature type="helix" evidence="28">
    <location>
        <begin position="2607"/>
        <end position="2609"/>
    </location>
</feature>
<feature type="helix" evidence="28">
    <location>
        <begin position="2611"/>
        <end position="2613"/>
    </location>
</feature>
<feature type="helix" evidence="28">
    <location>
        <begin position="2616"/>
        <end position="2629"/>
    </location>
</feature>
<feature type="strand" evidence="28">
    <location>
        <begin position="2630"/>
        <end position="2638"/>
    </location>
</feature>
<feature type="helix" evidence="28">
    <location>
        <begin position="2643"/>
        <end position="2646"/>
    </location>
</feature>
<feature type="helix" evidence="28">
    <location>
        <begin position="2649"/>
        <end position="2659"/>
    </location>
</feature>
<feature type="helix" evidence="28">
    <location>
        <begin position="2666"/>
        <end position="2678"/>
    </location>
</feature>
<feature type="turn" evidence="28">
    <location>
        <begin position="2679"/>
        <end position="2681"/>
    </location>
</feature>
<feature type="strand" evidence="28">
    <location>
        <begin position="2683"/>
        <end position="2686"/>
    </location>
</feature>
<feature type="strand" evidence="28">
    <location>
        <begin position="2692"/>
        <end position="2696"/>
    </location>
</feature>
<feature type="strand" evidence="29">
    <location>
        <begin position="2701"/>
        <end position="2703"/>
    </location>
</feature>
<feature type="helix" evidence="28">
    <location>
        <begin position="2706"/>
        <end position="2724"/>
    </location>
</feature>
<feature type="strand" evidence="28">
    <location>
        <begin position="2728"/>
        <end position="2735"/>
    </location>
</feature>
<feature type="strand" evidence="28">
    <location>
        <begin position="2738"/>
        <end position="2744"/>
    </location>
</feature>
<feature type="helix" evidence="28">
    <location>
        <begin position="2748"/>
        <end position="2764"/>
    </location>
</feature>
<feature type="strand" evidence="28">
    <location>
        <begin position="2769"/>
        <end position="2771"/>
    </location>
</feature>
<feature type="strand" evidence="28">
    <location>
        <begin position="2776"/>
        <end position="2778"/>
    </location>
</feature>
<feature type="helix" evidence="28">
    <location>
        <begin position="2779"/>
        <end position="2781"/>
    </location>
</feature>
<feature type="strand" evidence="28">
    <location>
        <begin position="2787"/>
        <end position="2793"/>
    </location>
</feature>
<feature type="strand" evidence="28">
    <location>
        <begin position="2799"/>
        <end position="2805"/>
    </location>
</feature>
<feature type="helix" evidence="28">
    <location>
        <begin position="2808"/>
        <end position="2819"/>
    </location>
</feature>
<feature type="helix" evidence="28">
    <location>
        <begin position="2826"/>
        <end position="2834"/>
    </location>
</feature>
<feature type="helix" evidence="28">
    <location>
        <begin position="2838"/>
        <end position="2842"/>
    </location>
</feature>
<feature type="helix" evidence="28">
    <location>
        <begin position="2844"/>
        <end position="2854"/>
    </location>
</feature>
<feature type="strand" evidence="24">
    <location>
        <begin position="2858"/>
        <end position="2860"/>
    </location>
</feature>
<feature type="strand" evidence="28">
    <location>
        <begin position="2862"/>
        <end position="2866"/>
    </location>
</feature>
<feature type="strand" evidence="28">
    <location>
        <begin position="2869"/>
        <end position="2873"/>
    </location>
</feature>
<feature type="helix" evidence="28">
    <location>
        <begin position="2875"/>
        <end position="2877"/>
    </location>
</feature>
<feature type="helix" evidence="28">
    <location>
        <begin position="2878"/>
        <end position="2886"/>
    </location>
</feature>
<feature type="helix" evidence="28">
    <location>
        <begin position="2888"/>
        <end position="2891"/>
    </location>
</feature>
<feature type="helix" evidence="28">
    <location>
        <begin position="2898"/>
        <end position="2911"/>
    </location>
</feature>
<feature type="helix" evidence="28">
    <location>
        <begin position="2916"/>
        <end position="2933"/>
    </location>
</feature>
<feature type="helix" evidence="28">
    <location>
        <begin position="2935"/>
        <end position="2944"/>
    </location>
</feature>
<feature type="helix" evidence="28">
    <location>
        <begin position="2946"/>
        <end position="2948"/>
    </location>
</feature>
<feature type="strand" evidence="33">
    <location>
        <begin position="2949"/>
        <end position="2951"/>
    </location>
</feature>
<feature type="helix" evidence="28">
    <location>
        <begin position="2959"/>
        <end position="2963"/>
    </location>
</feature>
<feature type="turn" evidence="28">
    <location>
        <begin position="2967"/>
        <end position="2970"/>
    </location>
</feature>
<feature type="turn" evidence="32">
    <location>
        <begin position="2975"/>
        <end position="2977"/>
    </location>
</feature>
<organismHost>
    <name type="scientific">Homo sapiens</name>
    <name type="common">Human</name>
    <dbReference type="NCBI Taxonomy" id="9606"/>
</organismHost>
<keyword id="KW-0002">3D-structure</keyword>
<keyword id="KW-0007">Acetylation</keyword>
<keyword id="KW-1072">Activation of host autophagy by virus</keyword>
<keyword id="KW-0053">Apoptosis</keyword>
<keyword id="KW-0067">ATP-binding</keyword>
<keyword id="KW-0167">Capsid protein</keyword>
<keyword id="KW-1165">Clathrin-mediated endocytosis of virus by host</keyword>
<keyword id="KW-1015">Disulfide bond</keyword>
<keyword id="KW-1170">Fusion of virus membrane with host endosomal membrane</keyword>
<keyword id="KW-1168">Fusion of virus membrane with host membrane</keyword>
<keyword id="KW-1078">G1/S host cell cycle checkpoint dysregulation by virus</keyword>
<keyword id="KW-0325">Glycoprotein</keyword>
<keyword id="KW-0347">Helicase</keyword>
<keyword id="KW-1032">Host cell membrane</keyword>
<keyword id="KW-1035">Host cytoplasm</keyword>
<keyword id="KW-1038">Host endoplasmic reticulum</keyword>
<keyword id="KW-1041">Host lipid droplet</keyword>
<keyword id="KW-1043">Host membrane</keyword>
<keyword id="KW-1045">Host mitochondrion</keyword>
<keyword id="KW-1048">Host nucleus</keyword>
<keyword id="KW-0945">Host-virus interaction</keyword>
<keyword id="KW-0378">Hydrolase</keyword>
<keyword id="KW-1090">Inhibition of host innate immune response by virus</keyword>
<keyword id="KW-1114">Inhibition of host interferon signaling pathway by virus</keyword>
<keyword id="KW-1097">Inhibition of host MAVS by virus</keyword>
<keyword id="KW-1113">Inhibition of host RLR pathway by virus</keyword>
<keyword id="KW-1105">Inhibition of host STAT1 by virus</keyword>
<keyword id="KW-1110">Inhibition of host TRAFs by virus</keyword>
<keyword id="KW-0922">Interferon antiviral system evasion</keyword>
<keyword id="KW-0407">Ion channel</keyword>
<keyword id="KW-0406">Ion transport</keyword>
<keyword id="KW-1017">Isopeptide bond</keyword>
<keyword id="KW-0449">Lipoprotein</keyword>
<keyword id="KW-0460">Magnesium</keyword>
<keyword id="KW-0472">Membrane</keyword>
<keyword id="KW-0479">Metal-binding</keyword>
<keyword id="KW-1121">Modulation of host cell cycle by virus</keyword>
<keyword id="KW-0511">Multifunctional enzyme</keyword>
<keyword id="KW-0547">Nucleotide-binding</keyword>
<keyword id="KW-0548">Nucleotidyltransferase</keyword>
<keyword id="KW-0553">Oncogene</keyword>
<keyword id="KW-0564">Palmitate</keyword>
<keyword id="KW-0597">Phosphoprotein</keyword>
<keyword id="KW-0645">Protease</keyword>
<keyword id="KW-0687">Ribonucleoprotein</keyword>
<keyword id="KW-0694">RNA-binding</keyword>
<keyword id="KW-0696">RNA-directed RNA polymerase</keyword>
<keyword id="KW-0720">Serine protease</keyword>
<keyword id="KW-0729">SH3-binding</keyword>
<keyword id="KW-0788">Thiol protease</keyword>
<keyword id="KW-0804">Transcription</keyword>
<keyword id="KW-0805">Transcription regulation</keyword>
<keyword id="KW-0808">Transferase</keyword>
<keyword id="KW-0812">Transmembrane</keyword>
<keyword id="KW-1133">Transmembrane helix</keyword>
<keyword id="KW-0813">Transport</keyword>
<keyword id="KW-0832">Ubl conjugation</keyword>
<keyword id="KW-1161">Viral attachment to host cell</keyword>
<keyword id="KW-0261">Viral envelope protein</keyword>
<keyword id="KW-0899">Viral immunoevasion</keyword>
<keyword id="KW-1182">Viral ion channel</keyword>
<keyword id="KW-0543">Viral nucleoprotein</keyword>
<keyword id="KW-1162">Viral penetration into host cytoplasm</keyword>
<keyword id="KW-0693">Viral RNA replication</keyword>
<keyword id="KW-0946">Virion</keyword>
<keyword id="KW-1164">Virus endocytosis by host</keyword>
<keyword id="KW-1160">Virus entry into host cell</keyword>
<keyword id="KW-0862">Zinc</keyword>
<reference key="1">
    <citation type="journal article" date="1992" name="Virology">
        <title>Genetic drift of hepatitis C virus during an 8.2-year infection in a chimpanzee: variability and stability.</title>
        <authorList>
            <person name="Okamoto H."/>
            <person name="Kojima M."/>
            <person name="Okada S."/>
            <person name="Yoshizawa H."/>
            <person name="Iizuka H."/>
            <person name="Tanaka T."/>
            <person name="Muchmore E.E."/>
            <person name="Peterson D.A."/>
            <person name="Ito Y."/>
            <person name="Mishiro S."/>
        </authorList>
    </citation>
    <scope>NUCLEOTIDE SEQUENCE [GENOMIC RNA]</scope>
    <source>
        <strain>Isolate HC-J4/91</strain>
    </source>
</reference>
<reference key="2">
    <citation type="journal article" date="1998" name="Virology">
        <title>Transcripts of a chimeric cDNA clone of hepatitis C virus genotype 1b are infectious in vivo.</title>
        <authorList>
            <person name="Yanagi M."/>
            <person name="St Claire M."/>
            <person name="Shapiro M."/>
            <person name="Emerson S.U."/>
            <person name="Purcell R.H."/>
            <person name="Bukh J."/>
        </authorList>
    </citation>
    <scope>NUCLEOTIDE SEQUENCE [GENOMIC RNA]</scope>
    <source>
        <strain>HC-J4</strain>
        <strain>Isolate pCV-J4L2S</strain>
        <strain>Isolate pCV-J4L4S</strain>
        <strain>Isolate pCV-J4L6S</strain>
    </source>
</reference>
<reference key="3">
    <citation type="journal article" date="2003" name="FEBS Lett.">
        <title>The p7 protein of hepatitis C virus forms an ion channel that is blocked by the antiviral drug, Amantadine.</title>
        <authorList>
            <person name="Griffin S.D."/>
            <person name="Beales L.P."/>
            <person name="Clarke D.S."/>
            <person name="Worsfold O."/>
            <person name="Evans S.D."/>
            <person name="Jaeger J."/>
            <person name="Harris M.P."/>
            <person name="Rowlands D.J."/>
        </authorList>
    </citation>
    <scope>ACTIVITY REGULATION (VIROPORIN P7)</scope>
    <scope>FUNCTION (VIROPORIN P7)</scope>
    <scope>SUBUNIT (VIROPORIN P7)</scope>
</reference>
<reference key="4">
    <citation type="journal article" date="2006" name="J. Biol. Chem.">
        <title>Evidence for the formation of a heptameric ion channel complex by the hepatitis C virus p7 protein in vitro.</title>
        <authorList>
            <person name="Clarke D."/>
            <person name="Griffin S."/>
            <person name="Beales L."/>
            <person name="Gelais C.S."/>
            <person name="Burgess S."/>
            <person name="Harris M."/>
            <person name="Rowlands D."/>
        </authorList>
    </citation>
    <scope>SUBUNIT (VIROPORIN P7)</scope>
</reference>
<reference key="5">
    <citation type="journal article" date="2006" name="Biochemistry">
        <title>Biochemical and pre-steady-state kinetic characterization of the hepatitis C virus RNA polymerase (NS5BDelta21, HC-J4).</title>
        <authorList>
            <person name="Cramer J."/>
            <person name="Jaeger J."/>
            <person name="Restle T."/>
        </authorList>
    </citation>
    <scope>CHARACTERIZATION (RNA-DIRECTED RNA POLYMERASE)</scope>
    <scope>SUBUNIT</scope>
    <source>
        <strain>Isolate pCV-J4L6S</strain>
    </source>
</reference>
<reference key="6">
    <citation type="journal article" date="2007" name="J. Mol. Biol.">
        <title>Characterisation of the role of zinc in the hepatitis C virus NS2/3 auto-cleavage and NS3 protease activities.</title>
        <authorList>
            <person name="Tedbury P.R."/>
            <person name="Harris M."/>
        </authorList>
    </citation>
    <scope>CATALYTIC ACTIVITY (PROTEASE NS2)</scope>
    <scope>CATALYTIC ACTIVITY (SERINE PROTEASE/HELICASE NS3)</scope>
    <scope>ZINC-BINDING (SERINE PROTEASE/HELICASE NS3)</scope>
    <scope>MUTAGENESIS OF CYS-922; CYS-1123; CYS-1125; SER-1165; CYS-1171; HIS-1175 AND CYS-1185</scope>
    <scope>ACTIVE SITE (SERINE PROTEASE/HELICASE NS3)</scope>
    <scope>COFACTOR (PROTEASE NS2)</scope>
    <scope>COFACTOR (SERINE PROTEASE/HELICASE NS3)</scope>
    <scope>DOMAIN (PROTEASE NS2)</scope>
    <scope>DOMAIN (SERINE PROTEASE/HELICASE NS3)</scope>
    <source>
        <strain>Isolate pCV-J4L6S</strain>
    </source>
</reference>
<reference key="7">
    <citation type="journal article" date="2003" name="J. Mol. Biol.">
        <title>Substrate complexes of hepatitis C virus RNA polymerase (HC-J4): structural evidence for nucleotide import and de-novo initiation.</title>
        <authorList>
            <person name="O'Farrell D."/>
            <person name="Trowbridge R."/>
            <person name="Rowlands D."/>
            <person name="Jager J."/>
        </authorList>
    </citation>
    <scope>X-RAY CRYSTALLOGRAPHY (2.0 ANGSTROMS) OF 2420-2989</scope>
</reference>
<evidence type="ECO:0000250" key="1"/>
<evidence type="ECO:0000250" key="2">
    <source>
        <dbReference type="UniProtKB" id="P26662"/>
    </source>
</evidence>
<evidence type="ECO:0000250" key="3">
    <source>
        <dbReference type="UniProtKB" id="P26663"/>
    </source>
</evidence>
<evidence type="ECO:0000250" key="4">
    <source>
        <dbReference type="UniProtKB" id="P26664"/>
    </source>
</evidence>
<evidence type="ECO:0000250" key="5">
    <source>
        <dbReference type="UniProtKB" id="P27958"/>
    </source>
</evidence>
<evidence type="ECO:0000250" key="6">
    <source>
        <dbReference type="UniProtKB" id="P29846"/>
    </source>
</evidence>
<evidence type="ECO:0000250" key="7">
    <source>
        <dbReference type="UniProtKB" id="Q01403"/>
    </source>
</evidence>
<evidence type="ECO:0000250" key="8">
    <source>
        <dbReference type="UniProtKB" id="Q03463"/>
    </source>
</evidence>
<evidence type="ECO:0000250" key="9">
    <source>
        <dbReference type="UniProtKB" id="Q5EG65"/>
    </source>
</evidence>
<evidence type="ECO:0000250" key="10">
    <source>
        <dbReference type="UniProtKB" id="Q913V3"/>
    </source>
</evidence>
<evidence type="ECO:0000250" key="11">
    <source>
        <dbReference type="UniProtKB" id="Q99IB8"/>
    </source>
</evidence>
<evidence type="ECO:0000250" key="12">
    <source>
        <dbReference type="UniProtKB" id="Q9WMX2"/>
    </source>
</evidence>
<evidence type="ECO:0000255" key="13"/>
<evidence type="ECO:0000255" key="14">
    <source>
        <dbReference type="PROSITE-ProRule" id="PRU00539"/>
    </source>
</evidence>
<evidence type="ECO:0000255" key="15">
    <source>
        <dbReference type="PROSITE-ProRule" id="PRU00541"/>
    </source>
</evidence>
<evidence type="ECO:0000255" key="16">
    <source>
        <dbReference type="PROSITE-ProRule" id="PRU01030"/>
    </source>
</evidence>
<evidence type="ECO:0000255" key="17">
    <source>
        <dbReference type="PROSITE-ProRule" id="PRU01166"/>
    </source>
</evidence>
<evidence type="ECO:0000256" key="18">
    <source>
        <dbReference type="SAM" id="MobiDB-lite"/>
    </source>
</evidence>
<evidence type="ECO:0000269" key="19">
    <source>
    </source>
</evidence>
<evidence type="ECO:0000269" key="20">
    <source>
    </source>
</evidence>
<evidence type="ECO:0000269" key="21">
    <source>
    </source>
</evidence>
<evidence type="ECO:0000305" key="22"/>
<evidence type="ECO:0000305" key="23">
    <source>
    </source>
</evidence>
<evidence type="ECO:0007829" key="24">
    <source>
        <dbReference type="PDB" id="1NB4"/>
    </source>
</evidence>
<evidence type="ECO:0007829" key="25">
    <source>
        <dbReference type="PDB" id="2F55"/>
    </source>
</evidence>
<evidence type="ECO:0007829" key="26">
    <source>
        <dbReference type="PDB" id="2MTS"/>
    </source>
</evidence>
<evidence type="ECO:0007829" key="27">
    <source>
        <dbReference type="PDB" id="3HKY"/>
    </source>
</evidence>
<evidence type="ECO:0007829" key="28">
    <source>
        <dbReference type="PDB" id="3TYQ"/>
    </source>
</evidence>
<evidence type="ECO:0007829" key="29">
    <source>
        <dbReference type="PDB" id="4J08"/>
    </source>
</evidence>
<evidence type="ECO:0007829" key="30">
    <source>
        <dbReference type="PDB" id="4JJU"/>
    </source>
</evidence>
<evidence type="ECO:0007829" key="31">
    <source>
        <dbReference type="PDB" id="4JU1"/>
    </source>
</evidence>
<evidence type="ECO:0007829" key="32">
    <source>
        <dbReference type="PDB" id="4RY7"/>
    </source>
</evidence>
<evidence type="ECO:0007829" key="33">
    <source>
        <dbReference type="PDB" id="5CZB"/>
    </source>
</evidence>
<evidence type="ECO:0007829" key="34">
    <source>
        <dbReference type="PDB" id="5NPH"/>
    </source>
</evidence>
<sequence length="3010" mass="326767">MSTNPKPQRKTKRNTNRRPQDVKFPGGGQIVGGVYLLPRRGPRLGVRATRKASERSQPRGRRQPIPKARRPEGRAWAQPGYPWPLYGNEGLGWAGWLLSPRGSRPSWGPTDPRRRSRNLGKVIDTLTCGFADLMGYIPLVGAPLGGAARALAHGVRVLEDGVNYATGNLPGCSFSIFLLALLSCLTIPASAYEVRNVSGIYHVTNDCSNSSIVYEAADVIMHTPGCVPCVREGNSSRCWVALTPTLAARNASVPTTTIRRHVDLLVGTAAFCSAMYVGDLCGSIFLVSQLFTFSPRRHETVQDCNCSIYPGHVSGHRMAWDMMMNWSPTTALVVSQLLRIPQAVVDMVAGAHWGVLAGLAYYSMVGNWAKVLIVALLFAGVDGETHTTGRVAGHTTSGFTSLFSSGASQKIQLVNTNGSWHINRTALNCNDSLQTGFFAALFYAHKFNSSGCPERMASCRPIDWFAQGWGPITYTKPNSSDQRPYCWHYAPRPCGVVPASQVCGPVYCFTPSPVVVGTTDRSGVPTYSWGENETDVMLLNNTRPPQGNWFGCTWMNSTGFTKTCGGPPCNIGGVGNRTLICPTDCFRKHPEATYTKCGSGPWLTPRCLVDYPYRLWHYPCTLNFSIFKVRMYVGGVEHRLNAACNWTRGERCNLEDRDRSELSPLLLSTTEWQILPCAFTTLPALSTGLIHLHQNIVDVQYLYGVGSAFVSFAIKWEYILLLFLLLADARVCACLWMMLLIAQAEAALENLVVLNAASVAGAHGILSFLVFFCAAWYIKGRLAPGAAYAFYGVWPLLLLLLALPPRAYALDREMAASCGGAVLVGLVFLTLSPYYKVFLTRLIWWLQYFITRAEAHMQVWVPPLNVRGGRDAIILLTCAVHPELIFDITKLLLAILGPLMVLQAGITRVPYFVRAQGLIRACMLVRKVAGGHYVQMAFMKLGALTGTYVYNHLTPLRDWAHAGLRDLAVAVEPVVFSAMETKVITWGADTAACGDIILGLPVSARRGKEIFLGPADSLEGQGWRLLAPITAYSQQTRGVLGCIITSLTGRDKNQVEGEVQVVSTATQSFLATCINGVCWTVYHGAGSKTLAGPKGPITQMYTNVDLDLVGWQAPPGARSMTPCSCGSSDLYLVTRHADVIPVRRRGDSRGSLLSPRPVSYLKGSSGGPLLCPSGHVVGVFRAAVCTRGVAKAVDFIPVESMETTMRSPVFTDNSSPPAVPQTFQVAHLHAPTGSGKSTKVPAAYAAQGYKVLVLNPSVAATLGFGAYMSKAHGIDPNIRTGVRTITTGGSITYSTYGKFLADGGCSGGAYDIIICDECHSTDSTTILGIGTVLDQAETAGARLVVLATATPPGSVTVPHPNIEEIGLSNNGEIPFYGKAIPIEAIKGGRHLIFCHSKKKCDELAAKLTGLGLNAVAYYRGLDVSVIPPIGDVVVVATDALMTGFTGDFDSVIDCNTCVTQTVDFSLDPTFTIETTTVPQDAVSRSQRRGRTGRGRSGIYRFVTPGERPSGMFDSSVLCECYDAGCAWYELTPAETSVRLRAYLNTPGLPVCQDHLEFWESVFTGLTHIDAHFLSQTKQAGDNFPYLVAYQATVCARAQAPPPSWDQMWKCLIRLKPTLHGPTPLLYRLGAVQNEVILTHPITKYIMACMSADLEVVTSTWVLVGGVLAALAAYCLTTGSVVIVGRIILSGKPAVVPDREVLYQEFDEMEECASQLPYIEQGMQLAEQFKQKALGLLQTATKQAEAAAPVVESKWRALETFWAKHMWNFISGIQYLAGLSTLPGNPAIASLMAFTASITSPLTTQNTLLFNILGGWVAAQLAPPSAASAFVGAGIAGAAVGSIGLGKVLVDILAGYGAGVAGALVAFKVMSGEVPSTEDLVNLLPAILSPGALVVGVVCAAILRRHVGPGEGAVQWMNRLIAFASRGNHVSPTHYVPESDAAARVTQILSSLTITQLLKRLHQWINEDCSTPCSGSWLRDVWDWICTVLTDFKTWLQSKLLPRLPGVPFLSCQRGYKGVWRGDGIMQTTCPCGAQIAGHVKNGSMRIVGPRTCSNTWHGTFPINAYTTGPCTPSPAPNYSRALWRVAAEEYVEVTRVGDFHYVTGMTTDNVKCPCQVPAPEFFTEVDGVRLHRYAPACKPLLREDVTFQVGLNQYLVGSQLPCEPEPDVTVLTSMLTDPSHITAETAKRRLARGSPPSLASSSASQLSAPSLKATCTTHHDSPDADLIEANLLWRQEMGGNITRVESENKVVILDSFEPLHAEGDEREISVAAEILRKSRKFPSALPIWARPDYNPPLLESWKDPDYVPPVVHGCPLPPTKAPPIPPPRRKRTVVLTESNVSSALAELATKTFGSSGSSAVDSGTATALPDLASDDGDKGSDVESYSSMPPLEGEPGDPDLSDGSWSTVSEEASEDVVCCSMSYTWTGALITPCAAEESKLPINPLSNSLLRHHNMVYATTSRSASLRQKKVTFDRLQVLDDHYRDVLKEMKAKASTVKAKLLSIEEACKLTPPHSAKSKFGYGAKDVRNLSSRAVNHIRSVWEDLLEDTETPIDTTIMAKSEVFCVQPEKGGRKPARLIVFPDLGVRVCEKMALYDVVSTLPQAVMGSSYGFQYSPKQRVEFLVNTWKSKKCPMGFSYDTRCFDSTVTESDIRVEESIYQCCDLAPEARQAIRSLTERLYIGGPLTNSKGQNCGYRRCRASGVLTTSCGNTLTCYLKATAACRAAKLQDCTMLVNGDDLVVICESAGTQEDAAALRAFTEAMTRYSAPPGDPPQPEYDLELITSCSSNVSVAHDASGKRVYYLTRDPTTPLARAAWETARHTPINSWLGNIIMYAPTLWARMILMTHFFSILLAQEQLEKALDCQIYGACYSIEPLDLPQIIERLHGLSAFTLHSYSPGEINRVASCLRKLGVPPLRTWRHRARSVRAKLLSQGGRAATCGRYLFNWAVRTKLKLTPIPAASQLDLSGWFVAGYSGGDIYHSLSRARPRWFPLCLLLLSVGVGIYLLPNR</sequence>
<accession>O92972</accession>
<accession>O92969</accession>
<accession>O92970</accession>
<accession>O92971</accession>
<accession>Q02828</accession>